<protein>
    <recommendedName>
        <fullName>HLA class II histocompatibility antigen, DP beta 1 chain</fullName>
    </recommendedName>
    <alternativeName>
        <fullName>HLA class II histocompatibility antigen, DP(W4) beta chain</fullName>
    </alternativeName>
    <alternativeName>
        <fullName>MHC class II antigen DPB1</fullName>
    </alternativeName>
</protein>
<sequence length="258" mass="29159">MMVLQVSAAPRTVALTALLMVLLTSVVQGRATPENYLFQGRQECYAFNGTQRFLERYIYNREEFARFDSDVGEFRAVTELGRPAAEYWNSQKDILEEKRAVPDRMCRHNYELGGPMTLQRRVQPRVNVSPSKKGPLQHHNLLVCHVTDFYPGSIQVRWFLNGQEETAGVVSTNLIRNGDWTFQILVMLEMTPQQGDVYTCQVEHTSLDSPVTVEWKAQSDSARSKTLTGAGGFVLGLIICGVGIFMHRRSKKVQRGSA</sequence>
<organism>
    <name type="scientific">Homo sapiens</name>
    <name type="common">Human</name>
    <dbReference type="NCBI Taxonomy" id="9606"/>
    <lineage>
        <taxon>Eukaryota</taxon>
        <taxon>Metazoa</taxon>
        <taxon>Chordata</taxon>
        <taxon>Craniata</taxon>
        <taxon>Vertebrata</taxon>
        <taxon>Euteleostomi</taxon>
        <taxon>Mammalia</taxon>
        <taxon>Eutheria</taxon>
        <taxon>Euarchontoglires</taxon>
        <taxon>Primates</taxon>
        <taxon>Haplorrhini</taxon>
        <taxon>Catarrhini</taxon>
        <taxon>Hominidae</taxon>
        <taxon>Homo</taxon>
    </lineage>
</organism>
<name>DPB1_HUMAN</name>
<reference key="1">
    <citation type="journal article" date="1984" name="EMBO J.">
        <title>Structure and polymorphism of the HLA class II SB light chain genes.</title>
        <authorList>
            <person name="Kappes D.J."/>
            <person name="Arnot D."/>
            <person name="Okada K."/>
            <person name="Strominger J.L."/>
        </authorList>
    </citation>
    <scope>NUCLEOTIDE SEQUENCE [MRNA] (ALLELE DPB1*02:01)</scope>
    <scope>NUCLEOTIDE SEQUENCE [GENOMIC DNA] (ALLELES DPB1*03:01 AND DPB1*04:01)</scope>
</reference>
<reference key="2">
    <citation type="journal article" date="1985" name="EMBO J.">
        <title>DO beta: a new beta chain gene in HLA-D with a distinct regulation of expression.</title>
        <authorList>
            <person name="Tonnelle C."/>
            <person name="Demars R."/>
            <person name="Long E.O."/>
        </authorList>
    </citation>
    <scope>NUCLEOTIDE SEQUENCE [MRNA] (ALLELE DPB1*02:01)</scope>
</reference>
<reference key="3">
    <citation type="journal article" date="1985" name="Nucleic Acids Res.">
        <title>Complete nucleotide sequence of a functional HLA-DP beta gene and the region between the DP beta 1 and DP alpha 1 genes: comparison of the 5' ends of HLA class II genes.</title>
        <authorList>
            <person name="Kelly A."/>
            <person name="Trowsdale J."/>
        </authorList>
    </citation>
    <scope>NUCLEOTIDE SEQUENCE [GENOMIC DNA] (ALLELE DPB1*04:01)</scope>
</reference>
<reference key="4">
    <citation type="journal article" date="1987" name="J. Biol. Chem.">
        <title>Class II genes of the human major histocompatibility complex. Evolution of the DP region as deduced from nucleotide sequences of the four genes.</title>
        <authorList>
            <person name="Gustafsson K."/>
            <person name="Widmark E."/>
            <person name="Jonsson A.-K."/>
            <person name="Servenius B."/>
            <person name="Sachs D.H."/>
            <person name="Larhammar D."/>
            <person name="Rask L."/>
            <person name="Peterson P.A."/>
        </authorList>
    </citation>
    <scope>NUCLEOTIDE SEQUENCE [GENOMIC DNA] (ALLELE DPB1*04:01)</scope>
</reference>
<reference key="5">
    <citation type="journal article" date="1988" name="Genomics">
        <title>The beta-chains of DP4 molecules from different haplotypes are encoded by the same gene.</title>
        <authorList>
            <person name="Compagnone-Post P."/>
            <person name="Turco E."/>
            <person name="Robinson C."/>
            <person name="Trucco M."/>
        </authorList>
    </citation>
    <scope>NUCLEOTIDE SEQUENCE [MRNA] (ALLELE DPB1*04:01)</scope>
</reference>
<reference key="6">
    <citation type="journal article" date="1992" name="Tissue Antigens">
        <title>A new HLA-DPB1 allele from a patient with systemic lupus erythematosus.</title>
        <authorList>
            <person name="Korioth F."/>
            <person name="Hartung K."/>
            <person name="Deicher H."/>
            <person name="Frey J."/>
        </authorList>
    </citation>
    <scope>NUCLEOTIDE SEQUENCE [MRNA] (ALLELE DPB1*01:01)</scope>
</reference>
<reference key="7">
    <citation type="journal article" date="2005" name="Immunogenetics">
        <title>Extended HLA-DPB1 polymorphism: an RNA approach for HLA-DPB1 typing.</title>
        <authorList>
            <person name="Reinders J."/>
            <person name="Rozemuller E.H."/>
            <person name="van Gent R."/>
            <person name="Arts-Hilkes Y.H."/>
            <person name="van den Tweel J.G."/>
            <person name="Tilanus M.G.J."/>
        </authorList>
    </citation>
    <scope>NUCLEOTIDE SEQUENCE [MRNA] (ALLELES DPB1*01:01; DPB1*02:02; DPB1*04:01; DPB1*04:02; DPB1*05:01; DPB1*05:02; DPB1*06:02; DPB1*08:02; DPB1*09:01; DPB1*09:02; DPB1*13:01; DPB1*15:01 AND DPB1*19:01)</scope>
</reference>
<reference key="8">
    <citation type="submission" date="2004-06" db="EMBL/GenBank/DDBJ databases">
        <authorList>
            <person name="Lee E."/>
            <person name="Kim E."/>
            <person name="Kwack K."/>
        </authorList>
    </citation>
    <scope>NUCLEOTIDE SEQUENCE [MRNA] (ALLELES DPB1*02:02; DPB1*05:01 AND DPB1*13:01)</scope>
</reference>
<reference key="9">
    <citation type="journal article" date="2004" name="Nat. Genet.">
        <title>Complete sequencing and characterization of 21,243 full-length human cDNAs.</title>
        <authorList>
            <person name="Ota T."/>
            <person name="Suzuki Y."/>
            <person name="Nishikawa T."/>
            <person name="Otsuki T."/>
            <person name="Sugiyama T."/>
            <person name="Irie R."/>
            <person name="Wakamatsu A."/>
            <person name="Hayashi K."/>
            <person name="Sato H."/>
            <person name="Nagai K."/>
            <person name="Kimura K."/>
            <person name="Makita H."/>
            <person name="Sekine M."/>
            <person name="Obayashi M."/>
            <person name="Nishi T."/>
            <person name="Shibahara T."/>
            <person name="Tanaka T."/>
            <person name="Ishii S."/>
            <person name="Yamamoto J."/>
            <person name="Saito K."/>
            <person name="Kawai Y."/>
            <person name="Isono Y."/>
            <person name="Nakamura Y."/>
            <person name="Nagahari K."/>
            <person name="Murakami K."/>
            <person name="Yasuda T."/>
            <person name="Iwayanagi T."/>
            <person name="Wagatsuma M."/>
            <person name="Shiratori A."/>
            <person name="Sudo H."/>
            <person name="Hosoiri T."/>
            <person name="Kaku Y."/>
            <person name="Kodaira H."/>
            <person name="Kondo H."/>
            <person name="Sugawara M."/>
            <person name="Takahashi M."/>
            <person name="Kanda K."/>
            <person name="Yokoi T."/>
            <person name="Furuya T."/>
            <person name="Kikkawa E."/>
            <person name="Omura Y."/>
            <person name="Abe K."/>
            <person name="Kamihara K."/>
            <person name="Katsuta N."/>
            <person name="Sato K."/>
            <person name="Tanikawa M."/>
            <person name="Yamazaki M."/>
            <person name="Ninomiya K."/>
            <person name="Ishibashi T."/>
            <person name="Yamashita H."/>
            <person name="Murakawa K."/>
            <person name="Fujimori K."/>
            <person name="Tanai H."/>
            <person name="Kimata M."/>
            <person name="Watanabe M."/>
            <person name="Hiraoka S."/>
            <person name="Chiba Y."/>
            <person name="Ishida S."/>
            <person name="Ono Y."/>
            <person name="Takiguchi S."/>
            <person name="Watanabe S."/>
            <person name="Yosida M."/>
            <person name="Hotuta T."/>
            <person name="Kusano J."/>
            <person name="Kanehori K."/>
            <person name="Takahashi-Fujii A."/>
            <person name="Hara H."/>
            <person name="Tanase T.-O."/>
            <person name="Nomura Y."/>
            <person name="Togiya S."/>
            <person name="Komai F."/>
            <person name="Hara R."/>
            <person name="Takeuchi K."/>
            <person name="Arita M."/>
            <person name="Imose N."/>
            <person name="Musashino K."/>
            <person name="Yuuki H."/>
            <person name="Oshima A."/>
            <person name="Sasaki N."/>
            <person name="Aotsuka S."/>
            <person name="Yoshikawa Y."/>
            <person name="Matsunawa H."/>
            <person name="Ichihara T."/>
            <person name="Shiohata N."/>
            <person name="Sano S."/>
            <person name="Moriya S."/>
            <person name="Momiyama H."/>
            <person name="Satoh N."/>
            <person name="Takami S."/>
            <person name="Terashima Y."/>
            <person name="Suzuki O."/>
            <person name="Nakagawa S."/>
            <person name="Senoh A."/>
            <person name="Mizoguchi H."/>
            <person name="Goto Y."/>
            <person name="Shimizu F."/>
            <person name="Wakebe H."/>
            <person name="Hishigaki H."/>
            <person name="Watanabe T."/>
            <person name="Sugiyama A."/>
            <person name="Takemoto M."/>
            <person name="Kawakami B."/>
            <person name="Yamazaki M."/>
            <person name="Watanabe K."/>
            <person name="Kumagai A."/>
            <person name="Itakura S."/>
            <person name="Fukuzumi Y."/>
            <person name="Fujimori Y."/>
            <person name="Komiyama M."/>
            <person name="Tashiro H."/>
            <person name="Tanigami A."/>
            <person name="Fujiwara T."/>
            <person name="Ono T."/>
            <person name="Yamada K."/>
            <person name="Fujii Y."/>
            <person name="Ozaki K."/>
            <person name="Hirao M."/>
            <person name="Ohmori Y."/>
            <person name="Kawabata A."/>
            <person name="Hikiji T."/>
            <person name="Kobatake N."/>
            <person name="Inagaki H."/>
            <person name="Ikema Y."/>
            <person name="Okamoto S."/>
            <person name="Okitani R."/>
            <person name="Kawakami T."/>
            <person name="Noguchi S."/>
            <person name="Itoh T."/>
            <person name="Shigeta K."/>
            <person name="Senba T."/>
            <person name="Matsumura K."/>
            <person name="Nakajima Y."/>
            <person name="Mizuno T."/>
            <person name="Morinaga M."/>
            <person name="Sasaki M."/>
            <person name="Togashi T."/>
            <person name="Oyama M."/>
            <person name="Hata H."/>
            <person name="Watanabe M."/>
            <person name="Komatsu T."/>
            <person name="Mizushima-Sugano J."/>
            <person name="Satoh T."/>
            <person name="Shirai Y."/>
            <person name="Takahashi Y."/>
            <person name="Nakagawa K."/>
            <person name="Okumura K."/>
            <person name="Nagase T."/>
            <person name="Nomura N."/>
            <person name="Kikuchi H."/>
            <person name="Masuho Y."/>
            <person name="Yamashita R."/>
            <person name="Nakai K."/>
            <person name="Yada T."/>
            <person name="Nakamura Y."/>
            <person name="Ohara O."/>
            <person name="Isogai T."/>
            <person name="Sugano S."/>
        </authorList>
    </citation>
    <scope>NUCLEOTIDE SEQUENCE [LARGE SCALE MRNA] (ALLELE DPB1*04:01)</scope>
    <source>
        <tissue>Spleen</tissue>
    </source>
</reference>
<reference key="10">
    <citation type="submission" date="2004-10" db="EMBL/GenBank/DDBJ databases">
        <title>Cloning of human full-length CDSs in BD Creator(TM) system donor vector.</title>
        <authorList>
            <person name="Kalnine N."/>
            <person name="Chen X."/>
            <person name="Rolfs A."/>
            <person name="Halleck A."/>
            <person name="Hines L."/>
            <person name="Eisenstein S."/>
            <person name="Koundinya M."/>
            <person name="Raphael J."/>
            <person name="Moreira D."/>
            <person name="Kelley T."/>
            <person name="LaBaer J."/>
            <person name="Lin Y."/>
            <person name="Phelan M."/>
            <person name="Farmer A."/>
        </authorList>
    </citation>
    <scope>NUCLEOTIDE SEQUENCE [LARGE SCALE MRNA] (ALLELE DPB1*01:01)</scope>
</reference>
<reference key="11">
    <citation type="journal article" date="2003" name="Nature">
        <title>The DNA sequence and analysis of human chromosome 6.</title>
        <authorList>
            <person name="Mungall A.J."/>
            <person name="Palmer S.A."/>
            <person name="Sims S.K."/>
            <person name="Edwards C.A."/>
            <person name="Ashurst J.L."/>
            <person name="Wilming L."/>
            <person name="Jones M.C."/>
            <person name="Horton R."/>
            <person name="Hunt S.E."/>
            <person name="Scott C.E."/>
            <person name="Gilbert J.G.R."/>
            <person name="Clamp M.E."/>
            <person name="Bethel G."/>
            <person name="Milne S."/>
            <person name="Ainscough R."/>
            <person name="Almeida J.P."/>
            <person name="Ambrose K.D."/>
            <person name="Andrews T.D."/>
            <person name="Ashwell R.I.S."/>
            <person name="Babbage A.K."/>
            <person name="Bagguley C.L."/>
            <person name="Bailey J."/>
            <person name="Banerjee R."/>
            <person name="Barker D.J."/>
            <person name="Barlow K.F."/>
            <person name="Bates K."/>
            <person name="Beare D.M."/>
            <person name="Beasley H."/>
            <person name="Beasley O."/>
            <person name="Bird C.P."/>
            <person name="Blakey S.E."/>
            <person name="Bray-Allen S."/>
            <person name="Brook J."/>
            <person name="Brown A.J."/>
            <person name="Brown J.Y."/>
            <person name="Burford D.C."/>
            <person name="Burrill W."/>
            <person name="Burton J."/>
            <person name="Carder C."/>
            <person name="Carter N.P."/>
            <person name="Chapman J.C."/>
            <person name="Clark S.Y."/>
            <person name="Clark G."/>
            <person name="Clee C.M."/>
            <person name="Clegg S."/>
            <person name="Cobley V."/>
            <person name="Collier R.E."/>
            <person name="Collins J.E."/>
            <person name="Colman L.K."/>
            <person name="Corby N.R."/>
            <person name="Coville G.J."/>
            <person name="Culley K.M."/>
            <person name="Dhami P."/>
            <person name="Davies J."/>
            <person name="Dunn M."/>
            <person name="Earthrowl M.E."/>
            <person name="Ellington A.E."/>
            <person name="Evans K.A."/>
            <person name="Faulkner L."/>
            <person name="Francis M.D."/>
            <person name="Frankish A."/>
            <person name="Frankland J."/>
            <person name="French L."/>
            <person name="Garner P."/>
            <person name="Garnett J."/>
            <person name="Ghori M.J."/>
            <person name="Gilby L.M."/>
            <person name="Gillson C.J."/>
            <person name="Glithero R.J."/>
            <person name="Grafham D.V."/>
            <person name="Grant M."/>
            <person name="Gribble S."/>
            <person name="Griffiths C."/>
            <person name="Griffiths M.N.D."/>
            <person name="Hall R."/>
            <person name="Halls K.S."/>
            <person name="Hammond S."/>
            <person name="Harley J.L."/>
            <person name="Hart E.A."/>
            <person name="Heath P.D."/>
            <person name="Heathcott R."/>
            <person name="Holmes S.J."/>
            <person name="Howden P.J."/>
            <person name="Howe K.L."/>
            <person name="Howell G.R."/>
            <person name="Huckle E."/>
            <person name="Humphray S.J."/>
            <person name="Humphries M.D."/>
            <person name="Hunt A.R."/>
            <person name="Johnson C.M."/>
            <person name="Joy A.A."/>
            <person name="Kay M."/>
            <person name="Keenan S.J."/>
            <person name="Kimberley A.M."/>
            <person name="King A."/>
            <person name="Laird G.K."/>
            <person name="Langford C."/>
            <person name="Lawlor S."/>
            <person name="Leongamornlert D.A."/>
            <person name="Leversha M."/>
            <person name="Lloyd C.R."/>
            <person name="Lloyd D.M."/>
            <person name="Loveland J.E."/>
            <person name="Lovell J."/>
            <person name="Martin S."/>
            <person name="Mashreghi-Mohammadi M."/>
            <person name="Maslen G.L."/>
            <person name="Matthews L."/>
            <person name="McCann O.T."/>
            <person name="McLaren S.J."/>
            <person name="McLay K."/>
            <person name="McMurray A."/>
            <person name="Moore M.J.F."/>
            <person name="Mullikin J.C."/>
            <person name="Niblett D."/>
            <person name="Nickerson T."/>
            <person name="Novik K.L."/>
            <person name="Oliver K."/>
            <person name="Overton-Larty E.K."/>
            <person name="Parker A."/>
            <person name="Patel R."/>
            <person name="Pearce A.V."/>
            <person name="Peck A.I."/>
            <person name="Phillimore B.J.C.T."/>
            <person name="Phillips S."/>
            <person name="Plumb R.W."/>
            <person name="Porter K.M."/>
            <person name="Ramsey Y."/>
            <person name="Ranby S.A."/>
            <person name="Rice C.M."/>
            <person name="Ross M.T."/>
            <person name="Searle S.M."/>
            <person name="Sehra H.K."/>
            <person name="Sheridan E."/>
            <person name="Skuce C.D."/>
            <person name="Smith S."/>
            <person name="Smith M."/>
            <person name="Spraggon L."/>
            <person name="Squares S.L."/>
            <person name="Steward C.A."/>
            <person name="Sycamore N."/>
            <person name="Tamlyn-Hall G."/>
            <person name="Tester J."/>
            <person name="Theaker A.J."/>
            <person name="Thomas D.W."/>
            <person name="Thorpe A."/>
            <person name="Tracey A."/>
            <person name="Tromans A."/>
            <person name="Tubby B."/>
            <person name="Wall M."/>
            <person name="Wallis J.M."/>
            <person name="West A.P."/>
            <person name="White S.S."/>
            <person name="Whitehead S.L."/>
            <person name="Whittaker H."/>
            <person name="Wild A."/>
            <person name="Willey D.J."/>
            <person name="Wilmer T.E."/>
            <person name="Wood J.M."/>
            <person name="Wray P.W."/>
            <person name="Wyatt J.C."/>
            <person name="Young L."/>
            <person name="Younger R.M."/>
            <person name="Bentley D.R."/>
            <person name="Coulson A."/>
            <person name="Durbin R.M."/>
            <person name="Hubbard T."/>
            <person name="Sulston J.E."/>
            <person name="Dunham I."/>
            <person name="Rogers J."/>
            <person name="Beck S."/>
        </authorList>
    </citation>
    <scope>NUCLEOTIDE SEQUENCE [LARGE SCALE GENOMIC DNA] (ALLELES DPB1*02:02; DPB1*03:01; DPB1*04:01 AND DPB1*04:02)</scope>
</reference>
<reference key="12">
    <citation type="submission" date="2005-07" db="EMBL/GenBank/DDBJ databases">
        <authorList>
            <person name="Mural R.J."/>
            <person name="Istrail S."/>
            <person name="Sutton G.G."/>
            <person name="Florea L."/>
            <person name="Halpern A.L."/>
            <person name="Mobarry C.M."/>
            <person name="Lippert R."/>
            <person name="Walenz B."/>
            <person name="Shatkay H."/>
            <person name="Dew I."/>
            <person name="Miller J.R."/>
            <person name="Flanigan M.J."/>
            <person name="Edwards N.J."/>
            <person name="Bolanos R."/>
            <person name="Fasulo D."/>
            <person name="Halldorsson B.V."/>
            <person name="Hannenhalli S."/>
            <person name="Turner R."/>
            <person name="Yooseph S."/>
            <person name="Lu F."/>
            <person name="Nusskern D.R."/>
            <person name="Shue B.C."/>
            <person name="Zheng X.H."/>
            <person name="Zhong F."/>
            <person name="Delcher A.L."/>
            <person name="Huson D.H."/>
            <person name="Kravitz S.A."/>
            <person name="Mouchard L."/>
            <person name="Reinert K."/>
            <person name="Remington K.A."/>
            <person name="Clark A.G."/>
            <person name="Waterman M.S."/>
            <person name="Eichler E.E."/>
            <person name="Adams M.D."/>
            <person name="Hunkapiller M.W."/>
            <person name="Myers E.W."/>
            <person name="Venter J.C."/>
        </authorList>
    </citation>
    <scope>NUCLEOTIDE SEQUENCE [LARGE SCALE GENOMIC DNA] (ALLELE DPB1*04:01)</scope>
</reference>
<reference key="13">
    <citation type="journal article" date="2004" name="Genome Res.">
        <title>The status, quality, and expansion of the NIH full-length cDNA project: the Mammalian Gene Collection (MGC).</title>
        <authorList>
            <consortium name="The MGC Project Team"/>
        </authorList>
    </citation>
    <scope>NUCLEOTIDE SEQUENCE [LARGE SCALE MRNA] (ALLELES DPB1*01:01 AND DPB1*04:01)</scope>
    <source>
        <tissue>B-cell</tissue>
        <tissue>Lymph</tissue>
    </source>
</reference>
<reference key="14">
    <citation type="journal article" date="1989" name="Immunogenetics">
        <title>Sequence polymorphism of HLA-DP beta chains.</title>
        <authorList>
            <person name="Lee J.S."/>
            <person name="Sartoris S."/>
            <person name="Briata P."/>
            <person name="Choi E."/>
            <person name="Cullen C."/>
            <person name="Lepaslier D."/>
            <person name="Yunis I."/>
        </authorList>
    </citation>
    <scope>NUCLEOTIDE SEQUENCE [MRNA] OF 9-258 (ALLELE DPB1*04:01)</scope>
</reference>
<reference key="15">
    <citation type="submission" date="1996-11" db="EMBL/GenBank/DDBJ databases">
        <title>HLA and mtDNA variation among the Baganda in Uganda.</title>
        <authorList>
            <person name="Louie L."/>
            <person name="Ginther C."/>
            <person name="Francisco A.M."/>
            <person name="van der Zwan A.W."/>
            <person name="Katongole-Mbidde E."/>
            <person name="Tilanus M.G.J."/>
            <person name="Klitz W."/>
        </authorList>
    </citation>
    <scope>NUCLEOTIDE SEQUENCE [GENOMIC DNA] OF 30-114 (ALLELE DPB1*75:01)</scope>
</reference>
<reference key="16">
    <citation type="journal article" date="1995" name="Tissue Antigens">
        <title>HLA-DPB1 alleles in a population from north India and description of a new variant (DPB1*5601).</title>
        <authorList>
            <person name="Rani R."/>
            <person name="Fernandez-Vina M.A."/>
            <person name="Zhang S."/>
            <person name="Stastny P."/>
        </authorList>
    </citation>
    <scope>NUCLEOTIDE SEQUENCE [GENOMIC DNA] OF 34-122 (ALLELE DPB1*56:01)</scope>
</reference>
<reference key="17">
    <citation type="journal article" date="1992" name="Tissue Antigens">
        <title>Characterization of novel HLA-DPB1 alleles by oligotyping and nucleotide sequencing.</title>
        <authorList>
            <person name="Hessner M.J."/>
            <person name="Baxter-Lowe L.A."/>
        </authorList>
    </citation>
    <scope>NUCLEOTIDE SEQUENCE [GENOMIC DNA] OF 34-121 (ALLELE DPB1*39:01)</scope>
</reference>
<reference key="18">
    <citation type="journal article" date="1996" name="Tissue Antigens">
        <title>DPB1*TF, a novel HLA class II DPB1 allele (DPB1*6701) identified in a Turkish family.</title>
        <authorList>
            <person name="Meyer C.G."/>
            <person name="May J."/>
            <person name="Simon C."/>
            <person name="Bohm B.O."/>
            <person name="Loeliger C.C."/>
        </authorList>
    </citation>
    <scope>NUCLEOTIDE SEQUENCE [GENOMIC DNA] OF 34-121 (ALLELE DPB1*67:01)</scope>
</reference>
<reference key="19">
    <citation type="journal article" date="1998" name="Tissue Antigens">
        <title>Identification of two new DPB1 alleles, DPB1*7701 and *7801, by sequence-based typing.</title>
        <authorList>
            <person name="Voorter C."/>
            <person name="Richeldi L."/>
            <person name="Gervais T."/>
            <person name="van den Berg-Loonen E."/>
        </authorList>
    </citation>
    <scope>NUCLEOTIDE SEQUENCE [GENOMIC DNA] OF 34-121 (DPB1*77:01 AND DPB1*78:01)</scope>
</reference>
<reference key="20">
    <citation type="journal article" date="1998" name="Tissue Antigens">
        <title>Identification of a new DPB1 allele (DPB1*7901) by sequence-based typing.</title>
        <authorList>
            <person name="Voorter C."/>
            <person name="Chatelain B."/>
            <person name="Sintnicolaas K."/>
            <person name="Tilanus M.G.J."/>
            <person name="Hidajat M."/>
            <person name="van den Berg-Loonen E."/>
        </authorList>
    </citation>
    <scope>NUCLEOTIDE SEQUENCE [GENOMIC DNA] OF 34-121 (ALLELE DPB1*79:01)</scope>
</reference>
<reference key="21">
    <citation type="journal article" date="2005" name="DNA Seq.">
        <title>DNA-sequence determination of exon 2 of a novel HLA-DPB1 allele, HLA-DPB1*0403.</title>
        <authorList>
            <person name="Weston A."/>
            <person name="Ensey J.S."/>
            <person name="Frye B.L."/>
        </authorList>
    </citation>
    <scope>NUCLEOTIDE SEQUENCE [GENOMIC DNA] OF 34-121 (ALLELE DPB1*04:03)</scope>
</reference>
<reference key="22">
    <citation type="submission" date="2003-06" db="EMBL/GenBank/DDBJ databases">
        <title>Two new HLA DP alleles.</title>
        <authorList>
            <person name="Cox S.T."/>
            <person name="Wallis-Jones S."/>
        </authorList>
    </citation>
    <scope>NUCLEOTIDE SEQUENCE [GENOMIC DNA] OF 34-121 (ALLELE DPB1*98:01)</scope>
    <source>
        <tissue>Blood</tissue>
    </source>
</reference>
<reference key="23">
    <citation type="submission" date="2006-10" db="EMBL/GenBank/DDBJ databases">
        <title>Sequence of DPB1*0301 allele, and sequence of HLA-DPB1*66new.</title>
        <authorList>
            <person name="Cox S.T."/>
        </authorList>
    </citation>
    <scope>NUCLEOTIDE SEQUENCE [GENOMIC DNA] OF 34-121 (ALLELE DPB1*20:02)</scope>
    <scope>NUCLEOTIDE SEQUENCE [GENOMIC DNA] OF 35-121 (ALLELE DPB1*14:02)</scope>
</reference>
<reference key="24">
    <citation type="submission" date="2007-04" db="EMBL/GenBank/DDBJ databases">
        <title>Sequence of DPB1*0101 variant.</title>
        <authorList>
            <person name="Casanova A.A."/>
        </authorList>
    </citation>
    <scope>NUCLEOTIDE SEQUENCE [GENOMIC DNA] OF 34-121 (ALLELE DPB1*21:02)</scope>
</reference>
<reference key="25">
    <citation type="journal article" date="1992" name="Tissue Antigens">
        <title>Genetic diversity within the HLA class II region: ten new DPB1 alleles and their population distribution.</title>
        <authorList>
            <person name="Moonsamy P.V."/>
            <person name="Suraj V.C."/>
            <person name="Bugawan T.L."/>
            <person name="Saiki R.K."/>
            <person name="Stoneking M."/>
            <person name="Roudier J."/>
            <person name="Magzoub M.M."/>
            <person name="Hill A.V."/>
            <person name="Begovich A.B."/>
        </authorList>
    </citation>
    <scope>NUCLEOTIDE SEQUENCE [GENOMIC DNA] OF 34-119 (ALLELES DPB1*30:01; DPB1*32:01; DPB1*33:01; DPB1*34:01 AND DPB1*35:01)</scope>
    <scope>NUCLEOTIDE SEQUENCE [GENOMIC DNA] OF 35-121 (ALLELE DPB1*27:01)</scope>
</reference>
<reference key="26">
    <citation type="journal article" date="1995" name="Immunogenetics">
        <title>Identification of the novel HLA-DPB1*5801 allele detected by sequenced based typing.</title>
        <authorList>
            <person name="Versluis L.F."/>
            <person name="van der Zwan A.W."/>
            <person name="Tilanus M.G.J."/>
            <person name="Daly L.N."/>
            <person name="Degli-Eposti M.A."/>
            <person name="Dawkins R.L."/>
        </authorList>
    </citation>
    <scope>NUCLEOTIDE SEQUENCE [GENOMIC DNA] OF 34-119 (ALLELE DPB1*58:01)</scope>
</reference>
<reference key="27">
    <citation type="journal article" date="1996" name="Tissue Antigens">
        <title>Three new DPB1 alleles identified in a Bantu-speaking population from central Cameroon.</title>
        <authorList>
            <person name="Zimmerman P.A."/>
            <person name="Steiner L.L."/>
            <person name="Titanji V.P."/>
            <person name="Nde P.N."/>
            <person name="Bradley J.E."/>
            <person name="Pogonka T."/>
            <person name="Begovich A.B."/>
        </authorList>
    </citation>
    <scope>NUCLEOTIDE SEQUENCE [GENOMIC DNA] OF 34-119 (ALLELES DPB1*60:01 AND DPB1*62:01)</scope>
</reference>
<reference key="28">
    <citation type="journal article" date="1984" name="Proc. Natl. Acad. Sci. U.S.A.">
        <title>Molecular organization of the HLA-SB region of the human major histocompatibility complex and evidence for two SB beta-chain genes.</title>
        <authorList>
            <person name="Gorski J."/>
            <person name="Rollini P."/>
            <person name="Long E."/>
            <person name="Mach B."/>
        </authorList>
    </citation>
    <scope>NUCLEOTIDE SEQUENCE [MRNA] OF 35-258</scope>
    <scope>VARIANTS LEU-94; VAL-105; ASP-113; GLU-114; ALA-115; VAL-116; LYS-125 AND ILE-199</scope>
</reference>
<reference key="29">
    <citation type="journal article" date="2009" name="Tissue Antigens">
        <title>In a study for acne vulgaris, sequence-based HLA typing showed a novel DPB1 allele, DPB1*2402.</title>
        <authorList>
            <person name="Witter K."/>
            <person name="Kirchner E."/>
            <person name="Borelli C."/>
            <person name="Messer G."/>
            <person name="Albert T."/>
            <person name="Zahn R."/>
            <person name="Kauke T."/>
        </authorList>
    </citation>
    <scope>NUCLEOTIDE SEQUENCE [GENOMIC DNA] OF 35-215 (ALLELE DPB1*24:02)</scope>
</reference>
<reference key="30">
    <citation type="submission" date="2009-03" db="EMBL/GenBank/DDBJ databases">
        <title>Confirmation of several HLA-DPB1 alleles including exon 3.</title>
        <authorList>
            <person name="Witter K."/>
            <person name="Tran H."/>
            <person name="Sabine S."/>
        </authorList>
    </citation>
    <scope>NUCLEOTIDE SEQUENCE [GENOMIC DNA] OF 35-215 (ALLELES DPB1*06:01; DPB1*16:01; DPB1*17:01; DPB1*18:01; DPB1*20:01; DPB1*23:01; DPB1*26:01; DPB1*26:02; DPB1*28:01; DPB1*45:01; DPB1*55:01; DPB1*85:01 AND DPB1*88:01)</scope>
</reference>
<reference key="31">
    <citation type="journal article" date="1988" name="J. Immunol.">
        <title>Analysis of HLA-DP allelic sequence polymorphism using the in vitro enzymatic DNA amplification of DP-alpha and DP-beta loci.</title>
        <authorList>
            <person name="Bugawan T.L."/>
            <person name="Horn G.T."/>
            <person name="Long C.M."/>
            <person name="Mickelson E."/>
            <person name="Hansen J.A."/>
            <person name="Ferrara G.B."/>
            <person name="Angelini G."/>
            <person name="Erlich H.A."/>
        </authorList>
    </citation>
    <scope>NUCLEOTIDE SEQUENCE [GENOMIC DNA] OF 35-121 (ALLELE DPB1*04:01)</scope>
</reference>
<reference key="32">
    <citation type="journal article" date="1990" name="Immunogenetics">
        <title>Rapid HLA-DPB typing using enzymatically amplified DNA and nonradioactive sequence-specific oligonucleotide probes.</title>
        <authorList>
            <person name="Bugawan T.L."/>
            <person name="Begovich A.B."/>
            <person name="Erlich H.A."/>
        </authorList>
    </citation>
    <scope>NUCLEOTIDE SEQUENCE [GENOMIC DNA] OF 35-121 (ALLELE DPB1*04:01)</scope>
    <scope>NUCLEOTIDE SEQUENCE [GENOMIC DNA] OF 37-121 (ALLELE DPB1*08:01)</scope>
</reference>
<reference key="33">
    <citation type="journal article" date="1993" name="Immunogenetics">
        <title>Novel class II HLA-DRB4 and DPB1 alleles found in the Belgian population.</title>
        <authorList>
            <person name="Buyse I."/>
            <person name="Emonds M.P."/>
            <person name="Bouillon R."/>
            <person name="Marynen P."/>
            <person name="Cassiman J.J."/>
        </authorList>
    </citation>
    <scope>NUCLEOTIDE SEQUENCE [GENOMIC DNA] OF 35-121 (ALLELE DPB1*46:01)</scope>
    <source>
        <tissue>Leukocyte</tissue>
    </source>
</reference>
<reference key="34">
    <citation type="journal article" date="1993" name="Tissue Antigens">
        <title>Identification of a new HLA-DPB1 allele detected by PCR-RFLP and its nucleotide sequence determination by direct sequencing after PCR amplification.</title>
        <authorList>
            <person name="Mizuki N."/>
            <person name="Ohno S."/>
            <person name="Sugimura K."/>
            <person name="Seki T."/>
            <person name="Ishioka M."/>
            <person name="Inoko H."/>
            <person name="Geng L."/>
        </authorList>
    </citation>
    <scope>NUCLEOTIDE SEQUENCE [GENOMIC DNA] OF 35-121 (ALLELE DPB1*41:01)</scope>
</reference>
<reference key="35">
    <citation type="journal article" date="1994" name="Tissue Antigens">
        <title>A new HLA-DPB1 allele, DPB1*SUT (DPB1*4701).</title>
        <authorList>
            <person name="Koshizaka T."/>
            <person name="Taguchi M."/>
            <person name="Onishi H."/>
            <person name="Kobayashi S."/>
            <person name="Inoko H."/>
        </authorList>
    </citation>
    <scope>NUCLEOTIDE SEQUENCE [GENOMIC DNA] OF 35-121 (ALLELE DPB1*47:01)</scope>
    <source>
        <tissue>Blood</tissue>
    </source>
</reference>
<reference key="36">
    <citation type="journal article" date="1994" name="Tissue Antigens">
        <title>Direct sequencing of a novel DPB1 allele (DPB1*5101) of the heterozygote from the membrane of reverse dot blot analysis.</title>
        <authorList>
            <person name="Kaneshige T."/>
            <person name="Kinoshita T."/>
            <person name="Hashimoto M."/>
            <person name="Matsumoto Y."/>
            <person name="Moribe T."/>
            <person name="Ichikawa Y."/>
            <person name="Fukunishi T."/>
            <person name="Uchida K."/>
        </authorList>
    </citation>
    <scope>NUCLEOTIDE SEQUENCE [GENOMIC DNA] OF 35-121 (ALLELE DPB1*51:01)</scope>
    <source>
        <tissue>Blood</tissue>
    </source>
</reference>
<reference key="37">
    <citation type="journal article" date="1996" name="Immunogenetics">
        <title>DPB1*BR: an Mhc class II DPB1 allele (DPB1*6601) of negroid origin.</title>
        <authorList>
            <person name="Schnittger L."/>
            <person name="May J."/>
            <person name="Kretschmer C."/>
            <person name="Kremsner P.G."/>
            <person name="Meyer C.G."/>
        </authorList>
    </citation>
    <scope>NUCLEOTIDE SEQUENCE [GENOMIC DNA] OF 35-121 (ALLELE DPB1*66:01)</scope>
    <source>
        <tissue>Blood</tissue>
    </source>
</reference>
<reference key="38">
    <citation type="journal article" date="1996" name="Immunogenetics">
        <title>Identification of a new HLA-DPB1*6501 allele in a Caucasian individual.</title>
        <authorList>
            <person name="Versluis L.F."/>
            <person name="Philippe M."/>
            <person name="Van der Zwan A."/>
            <person name="Thonnard J."/>
            <person name="Tongio M.M."/>
            <person name="Tilanus M.G.J."/>
        </authorList>
    </citation>
    <scope>NUCLEOTIDE SEQUENCE [GENOMIC DNA] OF 35-121 (ALLELE DPB1*65:01)</scope>
</reference>
<reference key="39">
    <citation type="journal article" date="2000" name="Tissue Antigens">
        <title>Two new HLA DPB1 alleles identified by sequence-based typing: DPB1*8201 and DPB1*8301.</title>
        <authorList>
            <person name="Voorter C."/>
            <person name="Tilanus M.G.J."/>
            <person name="van den Berg-Loonen E."/>
        </authorList>
    </citation>
    <scope>NUCLEOTIDE SEQUENCE [GENOMIC DNA] OF 35-121 (ALLELES DPB1*82:01 AND DPB1*83:01)</scope>
</reference>
<reference key="40">
    <citation type="journal article" date="2001" name="Tissue Antigens">
        <title>DPB1*8601, a previously unrecognized DPB1 variant in the Caucasoid population.</title>
        <authorList>
            <person name="Bengtsson M."/>
        </authorList>
    </citation>
    <scope>NUCLEOTIDE SEQUENCE [GENOMIC DNA] OF 35-121 (ALLELE DPB1*86:01)</scope>
</reference>
<reference key="41">
    <citation type="journal article" date="2001" name="Tissue Antigens">
        <title>Three new DP alleles identified in a study of 800 unrelated bone marrow donor-recipient pairs.</title>
        <authorList>
            <person name="Grams S.E."/>
            <person name="Wu J."/>
            <person name="Noreen H.J."/>
            <person name="Mangaccat J."/>
            <person name="Cognato M.A."/>
            <person name="Johnson S."/>
            <person name="Segall M."/>
            <person name="Williams T.M."/>
            <person name="Begovich A.B."/>
        </authorList>
    </citation>
    <scope>NUCLEOTIDE SEQUENCE [GENOMIC DNA] OF 35-121 (ALLELE DPB1*87:01)</scope>
</reference>
<reference key="42">
    <citation type="journal article" date="2002" name="Tissue Antigens">
        <title>Identification of a new HLA-DPB1 allele,HLA-DPB1*9001.</title>
        <authorList>
            <person name="Bengtsson M."/>
            <person name="Danielsson F."/>
            <person name="Jansson I.E."/>
            <person name="Johansson U."/>
        </authorList>
    </citation>
    <scope>NUCLEOTIDE SEQUENCE [GENOMIC DNA] OF 35-121 (ALLELE DPB1*90:01)</scope>
</reference>
<reference key="43">
    <citation type="journal article" date="2003" name="Tissue Antigens">
        <title>Identification of a novel DPB1 allele, DPB1*9301, by sequence-based typing in a Lahu ethnic minority of China.</title>
        <authorList>
            <person name="Liu Z.-H."/>
            <person name="Fan X."/>
            <person name="Lin J."/>
            <person name="Fu Y."/>
            <person name="Liu X."/>
            <person name="Xu A."/>
        </authorList>
    </citation>
    <scope>NUCLEOTIDE SEQUENCE [GENOMIC DNA] OF 35-121 (ALLELE DPB1*93:01)</scope>
</reference>
<reference key="44">
    <citation type="journal article" date="2003" name="Tissue Antigens">
        <title>High resolution sequence-based DPB1 typing identified two novel DPB1 alleles, DPB1*9401 and DPB1*9501, from a Kenyan population.</title>
        <authorList>
            <person name="Luo M."/>
            <person name="Ramdahin S."/>
            <person name="Iqbal S."/>
            <person name="Pan Y."/>
            <person name="Jacobson K."/>
            <person name="Narayansingh M.J."/>
            <person name="Schroeder M."/>
            <person name="Brunham R.C."/>
            <person name="Embree J."/>
            <person name="Plummer F.A."/>
        </authorList>
    </citation>
    <scope>NUCLEOTIDE SEQUENCE [GENOMIC DNA] OF 35-121 (ALLELES DPB1*94:01 AND DPB1*95:01)</scope>
</reference>
<reference key="45">
    <citation type="journal article" date="2003" name="Tissue Antigens">
        <title>Sequence-based typing identifies a novel HLA-DPB1 allele, DPB1*9601.</title>
        <authorList>
            <person name="Witter K."/>
            <person name="Gervais T."/>
            <person name="Dunn P.P."/>
            <person name="Voorter C."/>
            <person name="Muramoto J."/>
            <person name="Albert E.D."/>
        </authorList>
    </citation>
    <scope>NUCLEOTIDE SEQUENCE [GENOMIC DNA] OF 35-121 (DPB1*96:01)</scope>
</reference>
<reference key="46">
    <citation type="journal article" date="2004" name="Tissue Antigens">
        <title>Identification of a novel HLA-DPB1 allele--DPB1*0102.</title>
        <authorList>
            <person name="Lv F."/>
            <person name="Lin J."/>
            <person name="Liu Z.-H."/>
            <person name="Gao J."/>
            <person name="Fu Y."/>
            <person name="Xu A."/>
        </authorList>
    </citation>
    <scope>NUCLEOTIDE SEQUENCE [GENOMIC DNA] OF 35-121 (ALLELE DPB1*01:02)</scope>
</reference>
<reference key="47">
    <citation type="journal article" date="2006" name="Tissue Antigens">
        <title>Identification of a novel HLA-DPB1 allele, DPB1*1702.</title>
        <authorList>
            <person name="Li M."/>
            <person name="Nie J."/>
            <person name="Xu Y."/>
            <person name="Xu A."/>
            <person name="Yu X."/>
        </authorList>
    </citation>
    <scope>NUCLEOTIDE SEQUENCE [GENOMIC DNA] OF 35-121 (ALLELE DPB1*17:02)</scope>
    <source>
        <tissue>Blood</tissue>
    </source>
</reference>
<reference key="48">
    <citation type="submission" date="1993-01" db="EMBL/GenBank/DDBJ databases">
        <authorList>
            <person name="Kimura A."/>
        </authorList>
    </citation>
    <scope>NUCLEOTIDE SEQUENCE [GENOMIC DNA] OF 35-121 (ALLELES DPB1*21:01; DPB1*22:01; DPB1*24:01; DPB1*25:01; DPB1*29:01 AND DPB1*31:01)</scope>
</reference>
<reference key="49">
    <citation type="submission" date="2000-10" db="EMBL/GenBank/DDBJ databases">
        <title>A new HLA-DPB1* allele identical to the DPB1*0101 allele except for the polymorphic positions 226 and 228 where G and A are found respectively in place of A and G.</title>
        <authorList>
            <person name="Dormoy A."/>
            <person name="Routoulp M."/>
            <person name="Froelich N."/>
            <person name="Tongio M.M."/>
        </authorList>
    </citation>
    <scope>NUCLEOTIDE SEQUENCE [GENOMIC DNA] OF 35-121 (ALLELE DPB1*89:01)</scope>
</reference>
<reference key="50">
    <citation type="submission" date="2001-04" db="EMBL/GenBank/DDBJ databases">
        <title>A novel DPB1 allele.</title>
        <authorList>
            <person name="Varney M.D."/>
            <person name="Rossi V."/>
        </authorList>
    </citation>
    <scope>NUCLEOTIDE SEQUENCE [GENOMIC DNA] OF 35-121 (ALLELES DPB1*91:01 AND DPB1*92:01)</scope>
</reference>
<reference key="51">
    <citation type="submission" date="2002-03" db="EMBL/GenBank/DDBJ databases">
        <title>Sequence-based DPB typing fills the missing exon 2 sequences of multiple HLA-DPB1 alleles.</title>
        <authorList>
            <person name="Luo M."/>
            <person name="Mao X."/>
            <person name="Shehzad I."/>
            <person name="Jacobson K."/>
            <person name="Kwan L."/>
            <person name="Shroeder M."/>
            <person name="Plummer F.A."/>
        </authorList>
    </citation>
    <scope>NUCLEOTIDE SEQUENCE [GENOMIC DNA] OF 35-121 (ALLELE DPB1*10:01)</scope>
</reference>
<reference key="52">
    <citation type="submission" date="2003-09" db="EMBL/GenBank/DDBJ databases">
        <title>A novel DPB1 allele identified by sequence-based typing and Confirmed by SSP.</title>
        <authorList>
            <person name="Edelshtein D."/>
            <person name="Sidebottom D."/>
            <person name="Chen D.-F."/>
            <person name="Baxter-Lowe L.A."/>
        </authorList>
    </citation>
    <scope>NUCLEOTIDE SEQUENCE [GENOMIC DNA] OF 35-121 (ALLELE DPB1*99:01)</scope>
</reference>
<reference key="53">
    <citation type="submission" date="2004-03" db="EMBL/GenBank/DDBJ databases">
        <title>Novel human HLA-DPB1 allele identified in potential bone marrow donors.</title>
        <authorList>
            <person name="Wu J."/>
            <person name="Williams T.M."/>
            <person name="Cognato M.A."/>
        </authorList>
    </citation>
    <scope>NUCLEOTIDE SEQUENCE [GENOMIC DNA] OF 35-121 (ALLELE DPB1*02:03)</scope>
</reference>
<reference key="54">
    <citation type="submission" date="2004-12" db="EMBL/GenBank/DDBJ databases">
        <authorList>
            <person name="Garbarino L."/>
            <person name="Chiesa A."/>
            <person name="Pastori F."/>
            <person name="Sacchi N."/>
            <person name="Cusano R."/>
            <person name="Bottero F."/>
            <person name="Bossi R."/>
        </authorList>
    </citation>
    <scope>NUCLEOTIDE SEQUENCE [GENOMIC DNA] OF 35-121 (ALLELES DPB1*10:02 AND DPB1*11:02)</scope>
</reference>
<reference key="55">
    <citation type="submission" date="2005-06" db="EMBL/GenBank/DDBJ databases">
        <title>The identification of a new DPB1 allele in a type 1 diabetes genetics consortium family.</title>
        <authorList>
            <person name="Moonsamy P.V."/>
            <person name="Bonella P.L."/>
            <person name="Sali P.J."/>
            <person name="Bentley L.G."/>
            <person name="Post J.L."/>
            <person name="Goodwin G."/>
            <person name="Erlich H.E."/>
        </authorList>
    </citation>
    <scope>NUCLEOTIDE SEQUENCE [GENOMIC DNA] OF 35-121 (ALLELE DPB1*13:02)</scope>
</reference>
<reference key="56">
    <citation type="submission" date="2006-01" db="EMBL/GenBank/DDBJ databases">
        <title>HLA-DPB1*8601V1.</title>
        <authorList>
            <person name="Kashiwase K."/>
            <person name="Ichihara T."/>
            <person name="Shimizu M."/>
            <person name="Satake M."/>
        </authorList>
    </citation>
    <scope>NUCLEOTIDE SEQUENCE [GENOMIC DNA] OF 35-121 (ALLELE DPB1*16:02)</scope>
</reference>
<reference key="57">
    <citation type="submission" date="2006-02" db="EMBL/GenBank/DDBJ databases">
        <title>Identification of a novel DPB1 allele by sequence-based typing in the GoKinD population.</title>
        <authorList>
            <person name="Cordovado S.K."/>
            <person name="Hancock L.N."/>
            <person name="Mueller P.W."/>
        </authorList>
    </citation>
    <scope>NUCLEOTIDE SEQUENCE [GENOMIC DNA] OF 35-121 (ALLELE DPB1*18:02)</scope>
</reference>
<reference key="58">
    <citation type="submission" date="2006-04" db="EMBL/GenBank/DDBJ databases">
        <title>A New HLA-DPB1 allele.</title>
        <authorList>
            <person name="Monos D.S."/>
        </authorList>
    </citation>
    <scope>NUCLEOTIDE SEQUENCE [GENOMIC DNA] OF 35-121 (ALLELE DPB1*19:02)</scope>
</reference>
<reference key="59">
    <citation type="submission" date="2007-09" db="EMBL/GenBank/DDBJ databases">
        <title>Complete exon 2 sequence of the HLA-DPB1*110101 allele.</title>
        <authorList>
            <person name="Vilches C."/>
        </authorList>
    </citation>
    <scope>NUCLEOTIDE SEQUENCE [GENOMIC DNA] OF 35-121 (ALLELE DPB1*11:01)</scope>
    <source>
        <tissue>Peripheral blood</tissue>
    </source>
</reference>
<reference key="60">
    <citation type="submission" date="2008-09" db="EMBL/GenBank/DDBJ databases">
        <title>Exon 2 sequence of a new HLA-DPB1 allele DPB1*XX exhibiting single nucleotide difference G337A from HLA-DPB1*1401.</title>
        <authorList>
            <person name="McWhinnie A.J.M."/>
            <person name="Wallis-Jones S."/>
            <person name="Little A.M."/>
        </authorList>
    </citation>
    <scope>NUCLEOTIDE SEQUENCE [GENOMIC DNA] OF 35-121 (ALLELE DPB1*22:02)</scope>
    <source>
        <tissue>Peripheral blood</tissue>
    </source>
</reference>
<reference key="61">
    <citation type="submission" date="2009-04" db="EMBL/GenBank/DDBJ databases">
        <authorList>
            <person name="Lazaro A.M."/>
            <person name="Xiao Y."/>
            <person name="Nehlsen-Cannarella S.L."/>
            <person name="Fagoaga O.R."/>
            <person name="Hurley C.K."/>
        </authorList>
    </citation>
    <scope>NUCLEOTIDE SEQUENCE [GENOMIC DNA] OF 35-121 (ALLELE DPB1*25:02)</scope>
</reference>
<reference key="62">
    <citation type="journal article" date="1994" name="Tissue Antigens">
        <title>Seven new DPB1 alleles and their population distribution.</title>
        <authorList>
            <person name="Moonsamy P.V."/>
            <person name="Aldrich C.L."/>
            <person name="Petersdorf E.W."/>
            <person name="Hill A.V."/>
            <person name="Begovich A.B."/>
        </authorList>
    </citation>
    <scope>NUCLEOTIDE SEQUENCE [GENOMIC DNA] OF 35-119 (ALLELES DPB1*40:01; DPB1*48:01; DPB1*49:01; DPB1*50:01; DPB1*51:01; DPB1*52:01 AND DPB1*53:01)</scope>
</reference>
<reference key="63">
    <citation type="journal article" date="1997" name="Tissue Antigens">
        <title>Six new DPB1 alleles identified in a study of 1,302 unrelated bone marrow donor-recipient pairs.</title>
        <authorList>
            <person name="Noreen H.J."/>
            <person name="Steiner L.L."/>
            <person name="Davidson M."/>
            <person name="Johnson S."/>
            <person name="Segall M."/>
            <person name="Begovich A.B."/>
        </authorList>
    </citation>
    <scope>NUCLEOTIDE SEQUENCE [GENOMIC DNA] OF 35-119 (ALLELES DPB1*59:01; DPB1*68:01; DPB1*70:01; DPB1*71:01; DPB1*72:01 AND DPB1*73:01)</scope>
</reference>
<reference key="64">
    <citation type="journal article" date="1999" name="Tissue Antigens">
        <title>Four new DP alleles identified in a study of 500 unrelated bone marrow donor-recipient pairs.</title>
        <authorList>
            <person name="Steiner L.L."/>
            <person name="Wu J."/>
            <person name="Noreen H.J."/>
            <person name="Moehlenkamp C."/>
            <person name="Cavalli A.S."/>
            <person name="Davidson M."/>
            <person name="Johnson S."/>
            <person name="Winden T."/>
            <person name="Segall M."/>
            <person name="Begovich A.B."/>
            <person name="Williams T.M."/>
        </authorList>
    </citation>
    <scope>NUCLEOTIDE SEQUENCE [GENOMIC DNA] OF 35-119 (ALLELE DPB1*80:01)</scope>
    <scope>NUCLEOTIDE SEQUENCE [GENOMIC DNA] OF 35-117 (ALLELE DPB1*81:01)</scope>
</reference>
<reference key="65">
    <citation type="journal article" date="2004" name="Tissue Antigens">
        <title>Identification of a novel HLA-DPB1 allele, DPB1*9701, by sequence-based typing.</title>
        <authorList>
            <person name="Lapi S."/>
            <person name="Curcio M."/>
            <person name="Fornaciari S."/>
            <person name="Mariotti M.L."/>
            <person name="Isola P."/>
            <person name="Bonci F."/>
            <person name="Pistello M."/>
            <person name="Scatena F."/>
        </authorList>
    </citation>
    <scope>NUCLEOTIDE SEQUENCE [GENOMIC DNA] OF 35-119 (ALLELE DPB1*97:01)</scope>
</reference>
<reference key="66">
    <citation type="submission" date="1995-08" db="EMBL/GenBank/DDBJ databases">
        <authorList>
            <person name="Begovich A.B."/>
            <person name="Steiner L.L."/>
        </authorList>
    </citation>
    <scope>NUCLEOTIDE SEQUENCE [GENOMIC DNA] OF 35-119 (ALLELE DPB1*63:01)</scope>
</reference>
<reference key="67">
    <citation type="submission" date="1997-02" db="EMBL/GenBank/DDBJ databases">
        <title>A new HLA-DPB1 allele: a variant of DPB1*1401.</title>
        <authorList>
            <person name="Rozemuller E.H."/>
        </authorList>
    </citation>
    <scope>NUCLEOTIDE SEQUENCE [GENOMIC DNA] OF 35-119 (ALLELE DPB1*76:01)</scope>
</reference>
<reference key="68">
    <citation type="journal article" date="1995" name="Hum. Immunol.">
        <title>Novel HLA-DPB1 alleles detected in the Ethiopian population.</title>
        <authorList>
            <person name="Versluis L.F."/>
            <person name="Tilanus M.G.J."/>
            <person name="Verduyn W."/>
            <person name="Abdulkadir J."/>
            <person name="Giphart M.J."/>
        </authorList>
    </citation>
    <scope>NUCLEOTIDE SEQUENCE [GENOMIC DNA] OF 35-119 (ALLELE DPB1*44:01)</scope>
</reference>
<reference key="69">
    <citation type="journal article" date="1996" name="Tissue Antigens">
        <title>DPB1*5901a: a novel HLA-DPB1 allele from a Caucasian family with insulin-dependent diabetes mellitus.</title>
        <authorList>
            <person name="Noble J.A."/>
            <person name="Cavalli A.S."/>
            <person name="Erlich H.A."/>
        </authorList>
    </citation>
    <scope>NUCLEOTIDE SEQUENCE [GENOMIC DNA] OF 35-118 (ALLELE DPB1*59:01)</scope>
</reference>
<reference key="70">
    <citation type="journal article" date="2005" name="Tissue Antigens">
        <title>Identification of a new allele in a Sicilian individual: HLA-DPB1*0302.</title>
        <authorList>
            <person name="Sheldon M.H."/>
            <person name="Azzaro M.P."/>
            <person name="Sayer D."/>
            <person name="Bunce M."/>
            <person name="Sortino G."/>
        </authorList>
    </citation>
    <scope>NUCLEOTIDE SEQUENCE [GENOMIC DNA] OF 35-118 (ALLELE DPB1*03:02)</scope>
</reference>
<reference key="71">
    <citation type="submission" date="1996-03" db="EMBL/GenBank/DDBJ databases">
        <title>Identification of a novel DPB allele.</title>
        <authorList>
            <person name="Varney M.D."/>
            <person name="Tait B.D."/>
        </authorList>
    </citation>
    <scope>NUCLEOTIDE SEQUENCE [GENOMIC DNA] OF 35-117 (ALLELE DPB1*69:01)</scope>
</reference>
<reference key="72">
    <citation type="submission" date="1993-03" db="EMBL/GenBank/DDBJ databases">
        <title>A new HLA-DPB1 alleles from Santa Cruz Island, Solomon Islands.</title>
        <authorList>
            <person name="Easteal S."/>
            <person name="Croft L."/>
        </authorList>
    </citation>
    <scope>NUCLEOTIDE SEQUENCE [GENOMIC DNA] OF 35-114 (ALLELE DPB1*44:01)</scope>
    <source>
        <tissue>Blood</tissue>
    </source>
</reference>
<reference key="73">
    <citation type="journal article" date="1992" name="Tissue Antigens">
        <title>DPB1*WA4 - an additional HLA class II allele identified in west Africa.</title>
        <authorList>
            <person name="Meyer C.G."/>
            <person name="Schnittger L."/>
            <person name="Begovich A.B."/>
            <person name="Erlich H.A."/>
            <person name="Horstmann R.D."/>
        </authorList>
    </citation>
    <scope>NUCLEOTIDE SEQUENCE [GENOMIC DNA] OF 37-121 (ALLELE DPB1*37:01)</scope>
</reference>
<reference key="74">
    <citation type="journal article" date="1992" name="Hum. Immunol.">
        <title>Family study on HLA-DPB1 polymorphism: linkage analysis with HLA-DR/DQ and two 'new' alleles.</title>
        <authorList>
            <person name="Mitsunaga S."/>
            <person name="Kuwata S."/>
            <person name="Tokunaga K."/>
            <person name="Uchikawa C."/>
            <person name="Takahashi K."/>
            <person name="Akaza T."/>
            <person name="Mitomi Y."/>
            <person name="Juji T."/>
        </authorList>
    </citation>
    <scope>NUCLEOTIDE SEQUENCE [GENOMIC DNA] OF 37-119 (ALLELE DPB1*38:01)</scope>
</reference>
<reference key="75">
    <citation type="journal article" date="1994" name="Tissue Antigens">
        <title>A novel HLA-DPB1 allele, DPB1*3601 (DPB1*KT).</title>
        <authorList>
            <person name="Ogawa K."/>
            <person name="Itho H."/>
            <person name="Nakajyo S."/>
            <person name="Kobayashi K."/>
            <person name="Sekiguchi S."/>
            <person name="Koshizaka T."/>
            <person name="Taguchi M."/>
            <person name="Onishi H."/>
            <person name="Kobayashi S."/>
            <person name="Inoko H."/>
        </authorList>
    </citation>
    <scope>NUCLEOTIDE SEQUENCE [GENOMIC DNA] OF 37-119 (ALLELE DPB1*36:01)</scope>
</reference>
<reference key="76">
    <citation type="journal article" date="1998" name="Tissue Antigens">
        <title>Three new DP alleles identified in sub-Saharan Africa: DPB1*7401, DPA1*02013, and DPA1*0302.</title>
        <authorList>
            <person name="Steiner L.L."/>
            <person name="Cavalli A."/>
            <person name="Zimmerman P.A."/>
            <person name="Boatin B.A."/>
            <person name="Titanji V.P."/>
            <person name="Bradley J.E."/>
            <person name="Lucius R."/>
            <person name="Nutman T.B."/>
            <person name="Begovich A.B."/>
        </authorList>
    </citation>
    <scope>NUCLEOTIDE SEQUENCE [GENOMIC DNA] OF 37-119 (ALLELE DPB1*74:01)</scope>
</reference>
<reference key="77">
    <citation type="journal article" date="1995" name="Tissue Antigens">
        <title>Characterization of a new DPB1 allele (DPB1*5701) isolated from a Caucasian individual.</title>
        <authorList>
            <person name="Mersch G."/>
            <person name="Mytilineos J."/>
            <person name="De Canck I."/>
            <person name="Deufel A."/>
            <person name="Mijs W."/>
            <person name="Scherer S."/>
            <person name="Jannes G."/>
            <person name="Opelz G."/>
            <person name="Rossau R."/>
        </authorList>
    </citation>
    <scope>NUCLEOTIDE SEQUENCE [GENOMIC DNA] OF 37-115 (ALLELE DPB1*57:01)</scope>
    <source>
        <tissue>Lymphocyte</tissue>
    </source>
</reference>
<reference key="78">
    <citation type="journal article" date="2000" name="Tissue Antigens">
        <title>The nucleotide sequence of two new DP alleles, DPA1*02015 and DPB1*8401, identified in a Chinese subject.</title>
        <authorList>
            <person name="McTernan C.L."/>
            <person name="Mijovic C.H."/>
            <person name="Cockram C.S."/>
            <person name="Barnett A.H."/>
        </authorList>
    </citation>
    <scope>NUCLEOTIDE SEQUENCE [GENOMIC DNA] OF 39-121 (ALLELE DPB1*84:01)</scope>
</reference>
<reference key="79">
    <citation type="journal article" date="1983" name="Proc. Natl. Acad. Sci. U.S.A.">
        <title>Genetic mapping of a human class II antigen beta-chain cDNA clone to the SB region of the HLA complex.</title>
        <authorList>
            <person name="Roux-Dosseto M."/>
            <person name="Auffray C."/>
            <person name="Lillie J.W."/>
            <person name="Boss J.M."/>
            <person name="Cohen D."/>
            <person name="Demars R."/>
            <person name="Mawas C."/>
            <person name="Seidman J.G."/>
            <person name="Strominger J.L."/>
        </authorList>
    </citation>
    <scope>NUCLEOTIDE SEQUENCE [MRNA] OF 78-258 (ALLELE DPB1*02:01)</scope>
</reference>
<reference key="80">
    <citation type="journal article" date="1996" name="Cell">
        <title>Invariant chain structure and MHC class II function.</title>
        <authorList>
            <person name="Cresswell P."/>
        </authorList>
    </citation>
    <scope>REVIEW</scope>
</reference>
<reference key="81">
    <citation type="journal article" date="2001" name="Mol. Immunol.">
        <title>Presentation of antigens by MHC class II molecules: getting the most out of them.</title>
        <authorList>
            <person name="Villadangos J.A."/>
        </authorList>
    </citation>
    <scope>REVIEW</scope>
</reference>
<reference key="82">
    <citation type="journal article" date="2008" name="EMBO J.">
        <title>MHC class II molecules on the move for successful antigen presentation.</title>
        <authorList>
            <person name="Rocha N."/>
            <person name="Neefjes J."/>
        </authorList>
    </citation>
    <scope>REVIEW</scope>
</reference>
<reference key="83">
    <citation type="journal article" date="2007" name="Immunity">
        <title>Autophagy in MHC class II presentation: sampling from within.</title>
        <authorList>
            <person name="Menendez-Benito V."/>
            <person name="Neefjes J."/>
        </authorList>
    </citation>
    <scope>REVIEW</scope>
</reference>
<reference key="84">
    <citation type="journal article" date="2009" name="J. Cell Sci.">
        <title>MHC class II transport at a glance.</title>
        <authorList>
            <person name="Berger A.C."/>
            <person name="Roche P.A."/>
        </authorList>
    </citation>
    <scope>REVIEW</scope>
</reference>
<reference key="85">
    <citation type="journal article" date="2009" name="World J. Gastroenterol.">
        <title>CD74 in antigen presentation, inflammation, and cancers of the gastrointestinal tract.</title>
        <authorList>
            <person name="Beswick E.J."/>
            <person name="Reyes V.E."/>
        </authorList>
    </citation>
    <scope>REVIEW</scope>
</reference>
<comment type="function">
    <text>Binds peptides derived from antigens that access the endocytic route of antigen presenting cells (APC) and presents them on the cell surface for recognition by the CD4 T-cells. The peptide binding cleft accommodates peptides of 10-30 residues. The peptides presented by MHC class II molecules are generated mostly by degradation of proteins that access the endocytic route, where they are processed by lysosomal proteases and other hydrolases. Exogenous antigens that have been endocytosed by the APC are thus readily available for presentation via MHC II molecules, and for this reason this antigen presentation pathway is usually referred to as exogenous. As membrane proteins on their way to degradation in lysosomes as part of their normal turn-over are also contained in the endosomal/lysosomal compartments, exogenous antigens must compete with those derived from endogenous components. Autophagy is also a source of endogenous peptides, autophagosomes constitutively fuse with MHC class II loading compartments. In addition to APCs, other cells of the gastrointestinal tract, such as epithelial cells, express MHC class II molecules and CD74 and act as APCs, which is an unusual trait of the GI tract. To produce a MHC class II molecule that presents an antigen, three MHC class II molecules (heterodimers of an alpha and a beta chain) associate with a CD74 trimer in the ER to form a heterononamer. Soon after the entry of this complex into the endosomal/lysosomal system where antigen processing occurs, CD74 undergoes a sequential degradation by various proteases, including CTSS and CTSL, leaving a small fragment termed CLIP (class-II-associated invariant chain peptide). The removal of CLIP is facilitated by HLA-DM via direct binding to the alpha-beta-CLIP complex so that CLIP is released. HLA-DM stabilizes MHC class II molecules until primary high affinity antigenic peptides are bound. The MHC II molecule bound to a peptide is then transported to the cell membrane surface. In B-cells, the interaction between HLA-DM and MHC class II molecules is regulated by HLA-DO. Primary dendritic cells (DCs) also to express HLA-DO. Lysosomal microenvironment has been implicated in the regulation of antigen loading into MHC II molecules, increased acidification produces increased proteolysis and efficient peptide loading.</text>
</comment>
<comment type="subunit">
    <text>Heterodimer of an alpha and a beta subunit; also referred as MHC class II molecule. In the endoplasmic reticulum (ER) it forms a heterononamer; 3 MHC class II molecules bind to a CD74 homotrimer (also known as invariant chain or HLA class II histocompatibility antigen gamma chain). In the endosomal/lysosomal system; CD74 undergoes sequential degradation by various proteases; leaving a small fragment termed CLIP on each MHC class II molecule. MHC class II molecule interacts with HLA_DM, and HLA_DO in B-cells, in order to release CLIP and facilitate the binding of antigenic peptides.</text>
</comment>
<comment type="interaction">
    <interactant intactId="EBI-2802503">
        <id>P04440</id>
    </interactant>
    <interactant intactId="EBI-16439278">
        <id>Q6FHY5</id>
        <label>MEOX2</label>
    </interactant>
    <organismsDiffer>false</organismsDiffer>
    <experiments>3</experiments>
</comment>
<comment type="interaction">
    <interactant intactId="EBI-2802503">
        <id>P04440</id>
    </interactant>
    <interactant intactId="EBI-748974">
        <id>Q96CV9</id>
        <label>OPTN</label>
    </interactant>
    <organismsDiffer>false</organismsDiffer>
    <experiments>3</experiments>
</comment>
<comment type="subcellular location">
    <subcellularLocation>
        <location>Cell membrane</location>
        <topology>Single-pass type I membrane protein</topology>
    </subcellularLocation>
    <subcellularLocation>
        <location>Endoplasmic reticulum membrane</location>
        <topology>Single-pass type I membrane protein</topology>
    </subcellularLocation>
    <subcellularLocation>
        <location>Golgi apparatus</location>
        <location>trans-Golgi network membrane</location>
        <topology>Single-pass type I membrane protein</topology>
    </subcellularLocation>
    <subcellularLocation>
        <location>Endosome membrane</location>
        <topology>Single-pass type I membrane protein</topology>
    </subcellularLocation>
    <subcellularLocation>
        <location>Lysosome membrane</location>
        <topology>Single-pass type I membrane protein</topology>
    </subcellularLocation>
    <text>The MHC class II complex transits through a number of intracellular compartments in the endocytic pathway until it reaches the cell membrane for antigen presentation.</text>
</comment>
<comment type="polymorphism">
    <text>The following alleles of HLA-DPB1 are known: DPB1*01:01, DPB1*01:02, DPB1*02:01, DPB1*02:02, DPB1*02:03, DPB1*03:01, DPB1*03:02, DPB1*04:01, DPB1*04:02, DPB1*04:03, DPB1*05:01, DPB1*05:02, DPB1*06:01, DPB1*06:02, DPB1*08:01, DPB1*08:02, DPB1*09:01, DPB1*09:02, DPB1*10:01, DPB1*10:02, DPB1*11:01, DPB1*11:02, DPB1*13:01, DPB1*13:02, DPB1*14:01, DPB1*14:02, DPB1*15:01, DPB1*15:02, DPB1*16:01, DPB1*16:02, DPB1*17:01, DPB1*17:02, DPB1*18:01, DPB1*18:02, DPB1*19:01, DPB1*19:02, DPB1*20:01, DPB1*20:02, DPB1*21:01, DPB1*21:02, DPB1*22:01, DPB1*22:02, DPB1*23:01, DPB1*24:01, DPB1*24:02, DPB1*25:01, DPB1*25:02, DPB1*26:01, DPB1*26:02, DPB1*27:01, DPB1*28:01, DPB1*29:01, DPB1*30:01, DPB1*31:01, DPB1*32:01, DPB1*33:01, DPB1*34:01, DPB1*35:01, DPB1*36:01, DPB1*37:01, DPB1*38:01, DPB1*39:01, DPB1*40:01, DPB1*41:01, DPB1*44:01, DPB1*45:01, DPB1*46:01, DPB1*47:01, DPB1*48:01, DPB1*49:01, DPB1*50:01, DPB1*51:01, DPB1*52:01, DPB1*53:01, DPB1*54:01, DPB1*55:01, DPB1*56:01, DPB1*57:01, DPB1*58:01, DPB1*59:01, DPB1*60:01, DPB1*62:01, DPB1*63:01, DPB1*65:01, DPB1*66:01, DPB1*67:01, DPB1*68:01, DPB1*69:01, DPB1*70:01, DPB1*71:01, DPB1*72:01, DPB1*73:01, DPB1*74:01, DPB1*75:01, DPB1*76:01, DPB1*77:01, DPB1*78:01, DPB1*79:01, DPB1*80:01, DPB1*81:01, DPB1*82:01, DPB1*83:01, DPB1*84:01, DPB1*85:01, DPB1*86:01, DPB1*87:01, DPB1*88:01, DPB1*89:01, DPB1*90:01, DPB1*91:01, DPB1*92:01, DPB1*93:01, DPB1*94:01, DPB1*95:01, DPB1*96:01, DPB1*97:01, DPB1*98:01 and DPB1*99:01. The sequence shown is that of DPB1*04:01.</text>
</comment>
<comment type="similarity">
    <text evidence="4">Belongs to the MHC class II family.</text>
</comment>
<comment type="sequence caution" evidence="4">
    <conflict type="frameshift">
        <sequence resource="EMBL-CDS" id="AAQ12564"/>
    </conflict>
</comment>
<proteinExistence type="evidence at protein level"/>
<dbReference type="EMBL" id="X01426">
    <property type="protein sequence ID" value="CAA25672.1"/>
    <property type="molecule type" value="mRNA"/>
</dbReference>
<dbReference type="EMBL" id="X02964">
    <property type="status" value="NOT_ANNOTATED_CDS"/>
    <property type="molecule type" value="Genomic_DNA"/>
</dbReference>
<dbReference type="EMBL" id="X03023">
    <property type="protein sequence ID" value="CAE82008.1"/>
    <property type="molecule type" value="Genomic_DNA"/>
</dbReference>
<dbReference type="EMBL" id="X03024">
    <property type="protein sequence ID" value="CAE82007.1"/>
    <property type="molecule type" value="Genomic_DNA"/>
</dbReference>
<dbReference type="EMBL" id="X03022">
    <property type="protein sequence ID" value="CAA26823.1"/>
    <property type="molecule type" value="Genomic_DNA"/>
</dbReference>
<dbReference type="EMBL" id="X03025">
    <property type="protein sequence ID" value="CAE82037.1"/>
    <property type="molecule type" value="Genomic_DNA"/>
</dbReference>
<dbReference type="EMBL" id="X03026">
    <property type="protein sequence ID" value="CAE82042.1"/>
    <property type="molecule type" value="Genomic_DNA"/>
</dbReference>
<dbReference type="EMBL" id="X03028">
    <property type="protein sequence ID" value="CAE82073.1"/>
    <property type="molecule type" value="Genomic_DNA"/>
</dbReference>
<dbReference type="EMBL" id="X03027">
    <property type="protein sequence ID" value="CAE82043.1"/>
    <property type="molecule type" value="Genomic_DNA"/>
</dbReference>
<dbReference type="EMBL" id="X03067">
    <property type="protein sequence ID" value="CAA26871.1"/>
    <property type="molecule type" value="mRNA"/>
</dbReference>
<dbReference type="EMBL" id="X02228">
    <property type="protein sequence ID" value="CAA26147.1"/>
    <property type="molecule type" value="Genomic_DNA"/>
</dbReference>
<dbReference type="EMBL" id="J03041">
    <property type="protein sequence ID" value="AAA35993.1"/>
    <property type="molecule type" value="mRNA"/>
</dbReference>
<dbReference type="EMBL" id="M83664">
    <property type="protein sequence ID" value="AAA59837.1"/>
    <property type="molecule type" value="mRNA"/>
</dbReference>
<dbReference type="EMBL" id="AY804132">
    <property type="protein sequence ID" value="AAW78737.1"/>
    <property type="molecule type" value="mRNA"/>
</dbReference>
<dbReference type="EMBL" id="AY804133">
    <property type="protein sequence ID" value="AAW78738.1"/>
    <property type="molecule type" value="mRNA"/>
</dbReference>
<dbReference type="EMBL" id="AY804135">
    <property type="protein sequence ID" value="AAW78740.1"/>
    <property type="molecule type" value="mRNA"/>
</dbReference>
<dbReference type="EMBL" id="AY804136">
    <property type="protein sequence ID" value="AAW78741.1"/>
    <property type="molecule type" value="mRNA"/>
</dbReference>
<dbReference type="EMBL" id="AY804137">
    <property type="protein sequence ID" value="AAW78742.1"/>
    <property type="molecule type" value="mRNA"/>
</dbReference>
<dbReference type="EMBL" id="AY804138">
    <property type="protein sequence ID" value="AAW78743.1"/>
    <property type="molecule type" value="mRNA"/>
</dbReference>
<dbReference type="EMBL" id="AY804139">
    <property type="protein sequence ID" value="AAW78744.1"/>
    <property type="molecule type" value="mRNA"/>
</dbReference>
<dbReference type="EMBL" id="AY804141">
    <property type="protein sequence ID" value="AAW78746.1"/>
    <property type="molecule type" value="mRNA"/>
</dbReference>
<dbReference type="EMBL" id="AY804142">
    <property type="protein sequence ID" value="AAW78747.1"/>
    <property type="molecule type" value="mRNA"/>
</dbReference>
<dbReference type="EMBL" id="AY804143">
    <property type="protein sequence ID" value="AAW78748.1"/>
    <property type="molecule type" value="mRNA"/>
</dbReference>
<dbReference type="EMBL" id="AY831401">
    <property type="protein sequence ID" value="AAW80919.1"/>
    <property type="molecule type" value="mRNA"/>
</dbReference>
<dbReference type="EMBL" id="AY831402">
    <property type="protein sequence ID" value="AAW80920.1"/>
    <property type="molecule type" value="mRNA"/>
</dbReference>
<dbReference type="EMBL" id="AY831403">
    <property type="protein sequence ID" value="AAW80921.1"/>
    <property type="molecule type" value="mRNA"/>
</dbReference>
<dbReference type="EMBL" id="AY831404">
    <property type="protein sequence ID" value="AAW80922.1"/>
    <property type="molecule type" value="mRNA"/>
</dbReference>
<dbReference type="EMBL" id="AY656678">
    <property type="protein sequence ID" value="AAV71025.1"/>
    <property type="molecule type" value="mRNA"/>
</dbReference>
<dbReference type="EMBL" id="AY656679">
    <property type="protein sequence ID" value="AAV71026.1"/>
    <property type="molecule type" value="mRNA"/>
</dbReference>
<dbReference type="EMBL" id="AY656680">
    <property type="protein sequence ID" value="AAV71027.1"/>
    <property type="molecule type" value="mRNA"/>
</dbReference>
<dbReference type="EMBL" id="AK313305">
    <property type="protein sequence ID" value="BAG36110.1"/>
    <property type="molecule type" value="mRNA"/>
</dbReference>
<dbReference type="EMBL" id="BT019780">
    <property type="protein sequence ID" value="AAV38583.1"/>
    <property type="molecule type" value="mRNA"/>
</dbReference>
<dbReference type="EMBL" id="AL645931">
    <property type="status" value="NOT_ANNOTATED_CDS"/>
    <property type="molecule type" value="Genomic_DNA"/>
</dbReference>
<dbReference type="EMBL" id="AL662824">
    <property type="status" value="NOT_ANNOTATED_CDS"/>
    <property type="molecule type" value="Genomic_DNA"/>
</dbReference>
<dbReference type="EMBL" id="AL805913">
    <property type="status" value="NOT_ANNOTATED_CDS"/>
    <property type="molecule type" value="Genomic_DNA"/>
</dbReference>
<dbReference type="EMBL" id="AL845446">
    <property type="status" value="NOT_ANNOTATED_CDS"/>
    <property type="molecule type" value="Genomic_DNA"/>
</dbReference>
<dbReference type="EMBL" id="BX120009">
    <property type="status" value="NOT_ANNOTATED_CDS"/>
    <property type="molecule type" value="Genomic_DNA"/>
</dbReference>
<dbReference type="EMBL" id="CR759795">
    <property type="status" value="NOT_ANNOTATED_CDS"/>
    <property type="molecule type" value="Genomic_DNA"/>
</dbReference>
<dbReference type="EMBL" id="CR759904">
    <property type="status" value="NOT_ANNOTATED_CDS"/>
    <property type="molecule type" value="Genomic_DNA"/>
</dbReference>
<dbReference type="EMBL" id="CR762479">
    <property type="status" value="NOT_ANNOTATED_CDS"/>
    <property type="molecule type" value="Genomic_DNA"/>
</dbReference>
<dbReference type="EMBL" id="CH471081">
    <property type="protein sequence ID" value="EAX03674.1"/>
    <property type="molecule type" value="Genomic_DNA"/>
</dbReference>
<dbReference type="EMBL" id="BC007963">
    <property type="protein sequence ID" value="AAH07963.1"/>
    <property type="molecule type" value="mRNA"/>
</dbReference>
<dbReference type="EMBL" id="BC013184">
    <property type="protein sequence ID" value="AAH13184.1"/>
    <property type="molecule type" value="mRNA"/>
</dbReference>
<dbReference type="EMBL" id="M28202">
    <property type="protein sequence ID" value="AAA53197.1"/>
    <property type="molecule type" value="mRNA"/>
</dbReference>
<dbReference type="EMBL" id="Y09327">
    <property type="protein sequence ID" value="CAA70507.1"/>
    <property type="molecule type" value="Genomic_DNA"/>
</dbReference>
<dbReference type="EMBL" id="L31816">
    <property type="status" value="NOT_ANNOTATED_CDS"/>
    <property type="molecule type" value="Genomic_DNA"/>
</dbReference>
<dbReference type="EMBL" id="M97686">
    <property type="status" value="NOT_ANNOTATED_CDS"/>
    <property type="molecule type" value="Genomic_DNA"/>
</dbReference>
<dbReference type="EMBL" id="X96985">
    <property type="status" value="NOT_ANNOTATED_CDS"/>
    <property type="molecule type" value="Genomic_DNA"/>
</dbReference>
<dbReference type="EMBL" id="Y13900">
    <property type="protein sequence ID" value="CAA74199.1"/>
    <property type="molecule type" value="Genomic_DNA"/>
</dbReference>
<dbReference type="EMBL" id="Y14230">
    <property type="protein sequence ID" value="CAA74608.1"/>
    <property type="molecule type" value="Genomic_DNA"/>
</dbReference>
<dbReference type="EMBL" id="Y16095">
    <property type="protein sequence ID" value="CAA76060.1"/>
    <property type="molecule type" value="Genomic_DNA"/>
</dbReference>
<dbReference type="EMBL" id="AY823995">
    <property type="protein sequence ID" value="AAW79272.1"/>
    <property type="molecule type" value="Genomic_DNA"/>
</dbReference>
<dbReference type="EMBL" id="AJ563603">
    <property type="protein sequence ID" value="CAD91639.1"/>
    <property type="molecule type" value="Genomic_DNA"/>
</dbReference>
<dbReference type="EMBL" id="AM039828">
    <property type="protein sequence ID" value="CAJ01690.1"/>
    <property type="molecule type" value="Genomic_DNA"/>
</dbReference>
<dbReference type="EMBL" id="AM408787">
    <property type="protein sequence ID" value="CAL64063.1"/>
    <property type="molecule type" value="Genomic_DNA"/>
</dbReference>
<dbReference type="EMBL" id="AM698036">
    <property type="protein sequence ID" value="CAM91695.1"/>
    <property type="molecule type" value="Genomic_DNA"/>
</dbReference>
<dbReference type="EMBL" id="M84619">
    <property type="status" value="NOT_ANNOTATED_CDS"/>
    <property type="molecule type" value="Genomic_DNA"/>
</dbReference>
<dbReference type="EMBL" id="M84620">
    <property type="status" value="NOT_ANNOTATED_CDS"/>
    <property type="molecule type" value="Genomic_DNA"/>
</dbReference>
<dbReference type="EMBL" id="M84622">
    <property type="status" value="NOT_ANNOTATED_CDS"/>
    <property type="molecule type" value="Genomic_DNA"/>
</dbReference>
<dbReference type="EMBL" id="M84623">
    <property type="status" value="NOT_ANNOTATED_CDS"/>
    <property type="molecule type" value="Genomic_DNA"/>
</dbReference>
<dbReference type="EMBL" id="M84624">
    <property type="status" value="NOT_ANNOTATED_CDS"/>
    <property type="molecule type" value="Genomic_DNA"/>
</dbReference>
<dbReference type="EMBL" id="M84626">
    <property type="status" value="NOT_ANNOTATED_CDS"/>
    <property type="molecule type" value="Genomic_DNA"/>
</dbReference>
<dbReference type="EMBL" id="X82123">
    <property type="protein sequence ID" value="CAA57635.1"/>
    <property type="molecule type" value="Genomic_DNA"/>
</dbReference>
<dbReference type="EMBL" id="U22311">
    <property type="protein sequence ID" value="AAB60413.1"/>
    <property type="molecule type" value="Genomic_DNA"/>
</dbReference>
<dbReference type="EMBL" id="U22313">
    <property type="protein sequence ID" value="AAB17108.1"/>
    <property type="molecule type" value="Genomic_DNA"/>
</dbReference>
<dbReference type="EMBL" id="K01615">
    <property type="protein sequence ID" value="AAA36313.1"/>
    <property type="molecule type" value="mRNA"/>
</dbReference>
<dbReference type="EMBL" id="FM883600">
    <property type="protein sequence ID" value="CAT04585.2"/>
    <property type="molecule type" value="Genomic_DNA"/>
</dbReference>
<dbReference type="EMBL" id="FM882212">
    <property type="protein sequence ID" value="CAT03206.1"/>
    <property type="molecule type" value="Genomic_DNA"/>
</dbReference>
<dbReference type="EMBL" id="FM956650">
    <property type="protein sequence ID" value="CAX11690.1"/>
    <property type="molecule type" value="Genomic_DNA"/>
</dbReference>
<dbReference type="EMBL" id="FM991729">
    <property type="protein sequence ID" value="CAX20314.1"/>
    <property type="molecule type" value="Genomic_DNA"/>
</dbReference>
<dbReference type="EMBL" id="FM992080">
    <property type="protein sequence ID" value="CAX21583.2"/>
    <property type="molecule type" value="Genomic_DNA"/>
</dbReference>
<dbReference type="EMBL" id="FM992366">
    <property type="protein sequence ID" value="CAX30407.1"/>
    <property type="molecule type" value="Genomic_DNA"/>
</dbReference>
<dbReference type="EMBL" id="FM992364">
    <property type="protein sequence ID" value="CAX30405.1"/>
    <property type="molecule type" value="Genomic_DNA"/>
</dbReference>
<dbReference type="EMBL" id="FN252853">
    <property type="protein sequence ID" value="CAX53275.1"/>
    <property type="molecule type" value="Genomic_DNA"/>
</dbReference>
<dbReference type="EMBL" id="FN256250">
    <property type="protein sequence ID" value="CAX53717.1"/>
    <property type="molecule type" value="Genomic_DNA"/>
</dbReference>
<dbReference type="EMBL" id="FN256251">
    <property type="protein sequence ID" value="CAX53721.1"/>
    <property type="molecule type" value="Genomic_DNA"/>
</dbReference>
<dbReference type="EMBL" id="FN256254">
    <property type="protein sequence ID" value="CAX53718.1"/>
    <property type="molecule type" value="Genomic_DNA"/>
</dbReference>
<dbReference type="EMBL" id="FN256253">
    <property type="protein sequence ID" value="CAX53726.1"/>
    <property type="molecule type" value="Genomic_DNA"/>
</dbReference>
<dbReference type="EMBL" id="FN256255">
    <property type="protein sequence ID" value="CAX53722.1"/>
    <property type="molecule type" value="Genomic_DNA"/>
</dbReference>
<dbReference type="EMBL" id="FN393829">
    <property type="protein sequence ID" value="CAY85528.1"/>
    <property type="molecule type" value="Genomic_DNA"/>
</dbReference>
<dbReference type="EMBL" id="M23675">
    <property type="protein sequence ID" value="AAA59740.1"/>
    <property type="molecule type" value="Genomic_DNA"/>
</dbReference>
<dbReference type="EMBL" id="M62326">
    <property type="protein sequence ID" value="AAA59719.1"/>
    <property type="molecule type" value="Genomic_DNA"/>
</dbReference>
<dbReference type="EMBL" id="M62331">
    <property type="protein sequence ID" value="AAA59724.1"/>
    <property type="molecule type" value="Genomic_DNA"/>
</dbReference>
<dbReference type="EMBL" id="L07768">
    <property type="protein sequence ID" value="AAA59690.1"/>
    <property type="molecule type" value="Genomic_DNA"/>
</dbReference>
<dbReference type="EMBL" id="D13174">
    <property type="protein sequence ID" value="BAA02465.1"/>
    <property type="molecule type" value="Genomic_DNA"/>
</dbReference>
<dbReference type="EMBL" id="D10834">
    <property type="protein sequence ID" value="BAA01614.1"/>
    <property type="molecule type" value="Genomic_DNA"/>
</dbReference>
<dbReference type="EMBL" id="D28809">
    <property type="protein sequence ID" value="BAA05970.1"/>
    <property type="molecule type" value="Genomic_DNA"/>
</dbReference>
<dbReference type="EMBL" id="X96986">
    <property type="protein sequence ID" value="CAA65710.2"/>
    <property type="molecule type" value="Genomic_DNA"/>
</dbReference>
<dbReference type="EMBL" id="X91886">
    <property type="status" value="NOT_ANNOTATED_CDS"/>
    <property type="molecule type" value="Genomic_DNA"/>
</dbReference>
<dbReference type="EMBL" id="Y18498">
    <property type="protein sequence ID" value="CAC12860.1"/>
    <property type="molecule type" value="Genomic_DNA"/>
</dbReference>
<dbReference type="EMBL" id="AJ238005">
    <property type="protein sequence ID" value="CAC12865.1"/>
    <property type="molecule type" value="Genomic_DNA"/>
</dbReference>
<dbReference type="EMBL" id="AJ271373">
    <property type="protein sequence ID" value="CAB70605.2"/>
    <property type="molecule type" value="Genomic_DNA"/>
</dbReference>
<dbReference type="EMBL" id="AF288354">
    <property type="protein sequence ID" value="AAG30143.1"/>
    <property type="molecule type" value="Genomic_DNA"/>
</dbReference>
<dbReference type="EMBL" id="AJ292074">
    <property type="protein sequence ID" value="CAC27995.1"/>
    <property type="molecule type" value="Genomic_DNA"/>
</dbReference>
<dbReference type="EMBL" id="AF536241">
    <property type="protein sequence ID" value="AAN33050.1"/>
    <property type="molecule type" value="Genomic_DNA"/>
</dbReference>
<dbReference type="EMBL" id="AF549409">
    <property type="protein sequence ID" value="AAQ12563.1"/>
    <property type="molecule type" value="Genomic_DNA"/>
</dbReference>
<dbReference type="EMBL" id="AF549410">
    <property type="protein sequence ID" value="AAQ12564.1"/>
    <property type="status" value="ALT_FRAME"/>
    <property type="molecule type" value="Genomic_DNA"/>
</dbReference>
<dbReference type="EMBL" id="AJ514871">
    <property type="protein sequence ID" value="CAD55852.1"/>
    <property type="molecule type" value="Genomic_DNA"/>
</dbReference>
<dbReference type="EMBL" id="AY374100">
    <property type="protein sequence ID" value="AAR21105.1"/>
    <property type="molecule type" value="Genomic_DNA"/>
</dbReference>
<dbReference type="EMBL" id="DQ206450">
    <property type="protein sequence ID" value="ABB17974.1"/>
    <property type="molecule type" value="Genomic_DNA"/>
</dbReference>
<dbReference type="EMBL" id="M83914">
    <property type="protein sequence ID" value="AAA36264.1"/>
    <property type="molecule type" value="Genomic_DNA"/>
</dbReference>
<dbReference type="EMBL" id="M83915">
    <property type="protein sequence ID" value="AAA36259.1"/>
    <property type="molecule type" value="Genomic_DNA"/>
</dbReference>
<dbReference type="EMBL" id="M83916">
    <property type="protein sequence ID" value="AAA36260.1"/>
    <property type="molecule type" value="Genomic_DNA"/>
</dbReference>
<dbReference type="EMBL" id="M83917">
    <property type="protein sequence ID" value="AAA36261.1"/>
    <property type="molecule type" value="Genomic_DNA"/>
</dbReference>
<dbReference type="EMBL" id="M83918">
    <property type="protein sequence ID" value="AAA36262.1"/>
    <property type="molecule type" value="Genomic_DNA"/>
</dbReference>
<dbReference type="EMBL" id="M83919">
    <property type="protein sequence ID" value="AAA36263.1"/>
    <property type="molecule type" value="Genomic_DNA"/>
</dbReference>
<dbReference type="EMBL" id="AJ297820">
    <property type="protein sequence ID" value="CAC14048.1"/>
    <property type="molecule type" value="Genomic_DNA"/>
</dbReference>
<dbReference type="EMBL" id="AY029777">
    <property type="protein sequence ID" value="AAK40344.1"/>
    <property type="molecule type" value="Genomic_DNA"/>
</dbReference>
<dbReference type="EMBL" id="AF489518">
    <property type="protein sequence ID" value="AAL92172.1"/>
    <property type="molecule type" value="Genomic_DNA"/>
</dbReference>
<dbReference type="EMBL" id="AF492640">
    <property type="protein sequence ID" value="AAO84765.1"/>
    <property type="molecule type" value="Genomic_DNA"/>
</dbReference>
<dbReference type="EMBL" id="AY425707">
    <property type="protein sequence ID" value="AAR29060.1"/>
    <property type="molecule type" value="Genomic_DNA"/>
</dbReference>
<dbReference type="EMBL" id="AY572830">
    <property type="protein sequence ID" value="AAS77869.1"/>
    <property type="molecule type" value="Genomic_DNA"/>
</dbReference>
<dbReference type="EMBL" id="AY855160">
    <property type="protein sequence ID" value="AAW33682.1"/>
    <property type="molecule type" value="Genomic_DNA"/>
</dbReference>
<dbReference type="EMBL" id="AY855161">
    <property type="protein sequence ID" value="AAW33683.1"/>
    <property type="molecule type" value="Genomic_DNA"/>
</dbReference>
<dbReference type="EMBL" id="DQ089022">
    <property type="protein sequence ID" value="AAY98352.1"/>
    <property type="molecule type" value="Genomic_DNA"/>
</dbReference>
<dbReference type="EMBL" id="AB247517">
    <property type="protein sequence ID" value="BAE78492.1"/>
    <property type="molecule type" value="Genomic_DNA"/>
</dbReference>
<dbReference type="EMBL" id="DQ386161">
    <property type="protein sequence ID" value="ABD36812.1"/>
    <property type="molecule type" value="Genomic_DNA"/>
</dbReference>
<dbReference type="EMBL" id="DQ485789">
    <property type="protein sequence ID" value="ABF47047.1"/>
    <property type="molecule type" value="Genomic_DNA"/>
</dbReference>
<dbReference type="EMBL" id="AM887530">
    <property type="protein sequence ID" value="CAP08783.1"/>
    <property type="molecule type" value="Genomic_DNA"/>
</dbReference>
<dbReference type="EMBL" id="FM211032">
    <property type="protein sequence ID" value="CAR66500.1"/>
    <property type="molecule type" value="Genomic_DNA"/>
</dbReference>
<dbReference type="EMBL" id="FJ976693">
    <property type="protein sequence ID" value="ACS12738.1"/>
    <property type="molecule type" value="Genomic_DNA"/>
</dbReference>
<dbReference type="EMBL" id="L17310">
    <property type="protein sequence ID" value="AAA53479.1"/>
    <property type="molecule type" value="Genomic_DNA"/>
</dbReference>
<dbReference type="EMBL" id="L17311">
    <property type="protein sequence ID" value="AAA53480.1"/>
    <property type="molecule type" value="Genomic_DNA"/>
</dbReference>
<dbReference type="EMBL" id="L17313">
    <property type="protein sequence ID" value="AAA53481.1"/>
    <property type="molecule type" value="Genomic_DNA"/>
</dbReference>
<dbReference type="EMBL" id="L17314">
    <property type="protein sequence ID" value="AAA53482.1"/>
    <property type="molecule type" value="Genomic_DNA"/>
</dbReference>
<dbReference type="EMBL" id="L22076">
    <property type="protein sequence ID" value="AAA53476.1"/>
    <property type="molecule type" value="Genomic_DNA"/>
</dbReference>
<dbReference type="EMBL" id="L22077">
    <property type="protein sequence ID" value="AAA53477.1"/>
    <property type="molecule type" value="Genomic_DNA"/>
</dbReference>
<dbReference type="EMBL" id="L23400">
    <property type="protein sequence ID" value="AAA58441.1"/>
    <property type="molecule type" value="Genomic_DNA"/>
</dbReference>
<dbReference type="EMBL" id="U59437">
    <property type="protein sequence ID" value="AAD09481.1"/>
    <property type="molecule type" value="Genomic_DNA"/>
</dbReference>
<dbReference type="EMBL" id="U59438">
    <property type="protein sequence ID" value="AAD09482.1"/>
    <property type="molecule type" value="Genomic_DNA"/>
</dbReference>
<dbReference type="EMBL" id="U59439">
    <property type="protein sequence ID" value="AAD09483.1"/>
    <property type="molecule type" value="Genomic_DNA"/>
</dbReference>
<dbReference type="EMBL" id="U59440">
    <property type="protein sequence ID" value="AAD09484.1"/>
    <property type="molecule type" value="Genomic_DNA"/>
</dbReference>
<dbReference type="EMBL" id="U59441">
    <property type="protein sequence ID" value="AAD09485.1"/>
    <property type="molecule type" value="Genomic_DNA"/>
</dbReference>
<dbReference type="EMBL" id="U59442">
    <property type="protein sequence ID" value="AAD09486.1"/>
    <property type="molecule type" value="Genomic_DNA"/>
</dbReference>
<dbReference type="EMBL" id="AF074845">
    <property type="protein sequence ID" value="AAD39682.1"/>
    <property type="molecule type" value="Genomic_DNA"/>
</dbReference>
<dbReference type="EMBL" id="AF074846">
    <property type="protein sequence ID" value="AAD39683.1"/>
    <property type="molecule type" value="Genomic_DNA"/>
</dbReference>
<dbReference type="EMBL" id="AY033075">
    <property type="protein sequence ID" value="AAK51161.1"/>
    <property type="molecule type" value="Genomic_DNA"/>
</dbReference>
<dbReference type="EMBL" id="U34033">
    <property type="protein sequence ID" value="AAA81335.1"/>
    <property type="molecule type" value="Genomic_DNA"/>
</dbReference>
<dbReference type="EMBL" id="Z92523">
    <property type="protein sequence ID" value="CAB06822.1"/>
    <property type="molecule type" value="Genomic_DNA"/>
</dbReference>
<dbReference type="EMBL" id="X78042">
    <property type="status" value="NOT_ANNOTATED_CDS"/>
    <property type="molecule type" value="Genomic_DNA"/>
</dbReference>
<dbReference type="EMBL" id="U29534">
    <property type="protein sequence ID" value="AAB52511.1"/>
    <property type="molecule type" value="Genomic_DNA"/>
</dbReference>
<dbReference type="EMBL" id="AY618897">
    <property type="protein sequence ID" value="AAT40308.1"/>
    <property type="molecule type" value="Genomic_DNA"/>
</dbReference>
<dbReference type="EMBL" id="X97406">
    <property type="protein sequence ID" value="CAA66059.1"/>
    <property type="molecule type" value="Genomic_DNA"/>
</dbReference>
<dbReference type="EMBL" id="L01466">
    <property type="status" value="NOT_ANNOTATED_CDS"/>
    <property type="molecule type" value="Genomic_DNA"/>
</dbReference>
<dbReference type="EMBL" id="M87046">
    <property type="status" value="NOT_ANNOTATED_CDS"/>
    <property type="molecule type" value="Genomic_DNA"/>
</dbReference>
<dbReference type="EMBL" id="D10478">
    <property type="protein sequence ID" value="BAA01281.1"/>
    <property type="molecule type" value="Genomic_DNA"/>
</dbReference>
<dbReference type="EMBL" id="D10882">
    <property type="protein sequence ID" value="BAA01704.1"/>
    <property type="molecule type" value="Genomic_DNA"/>
</dbReference>
<dbReference type="EMBL" id="U94839">
    <property type="protein sequence ID" value="AAC64232.1"/>
    <property type="molecule type" value="Genomic_DNA"/>
</dbReference>
<dbReference type="EMBL" id="X80752">
    <property type="protein sequence ID" value="CAA56728.1"/>
    <property type="molecule type" value="Genomic_DNA"/>
</dbReference>
<dbReference type="EMBL" id="AF077015">
    <property type="protein sequence ID" value="AAC26835.1"/>
    <property type="molecule type" value="Genomic_DNA"/>
</dbReference>
<dbReference type="EMBL" id="K00409">
    <property type="protein sequence ID" value="AAA36312.1"/>
    <property type="molecule type" value="mRNA"/>
</dbReference>
<dbReference type="CCDS" id="CCDS4765.1"/>
<dbReference type="PIR" id="A02228">
    <property type="entry name" value="HLHUS1"/>
</dbReference>
<dbReference type="PIR" id="A02229">
    <property type="entry name" value="HLHUPB"/>
</dbReference>
<dbReference type="PIR" id="D30536">
    <property type="entry name" value="D30536"/>
</dbReference>
<dbReference type="PIR" id="D30537">
    <property type="entry name" value="D30537"/>
</dbReference>
<dbReference type="PIR" id="E30536">
    <property type="entry name" value="E30536"/>
</dbReference>
<dbReference type="PIR" id="I37298">
    <property type="entry name" value="I37298"/>
</dbReference>
<dbReference type="PIR" id="I37541">
    <property type="entry name" value="S49382"/>
</dbReference>
<dbReference type="PIR" id="I38195">
    <property type="entry name" value="HLHUS2"/>
</dbReference>
<dbReference type="PIR" id="I38197">
    <property type="entry name" value="I38197"/>
</dbReference>
<dbReference type="PIR" id="I59621">
    <property type="entry name" value="I59621"/>
</dbReference>
<dbReference type="PIR" id="I59637">
    <property type="entry name" value="I59637"/>
</dbReference>
<dbReference type="PIR" id="I59641">
    <property type="entry name" value="I59641"/>
</dbReference>
<dbReference type="PIR" id="I81234">
    <property type="entry name" value="I81234"/>
</dbReference>
<dbReference type="PIR" id="I81235">
    <property type="entry name" value="I81235"/>
</dbReference>
<dbReference type="PIR" id="I81236">
    <property type="entry name" value="I81236"/>
</dbReference>
<dbReference type="PIR" id="I81237">
    <property type="entry name" value="I81237"/>
</dbReference>
<dbReference type="PIR" id="I81238">
    <property type="entry name" value="I81238"/>
</dbReference>
<dbReference type="RefSeq" id="NP_002112.3">
    <property type="nucleotide sequence ID" value="NM_002121.5"/>
</dbReference>
<dbReference type="PDB" id="3LQZ">
    <property type="method" value="X-ray"/>
    <property type="resolution" value="3.25 A"/>
    <property type="chains" value="B=33-218"/>
</dbReference>
<dbReference type="PDB" id="4P4K">
    <property type="method" value="X-ray"/>
    <property type="resolution" value="2.80 A"/>
    <property type="chains" value="B/F=32-218"/>
</dbReference>
<dbReference type="PDB" id="4P4R">
    <property type="method" value="X-ray"/>
    <property type="resolution" value="3.00 A"/>
    <property type="chains" value="B/D=32-218"/>
</dbReference>
<dbReference type="PDB" id="4P57">
    <property type="method" value="X-ray"/>
    <property type="resolution" value="2.60 A"/>
    <property type="chains" value="B/D=33-218"/>
</dbReference>
<dbReference type="PDB" id="4P5K">
    <property type="method" value="X-ray"/>
    <property type="resolution" value="2.59 A"/>
    <property type="chains" value="B/E=33-218"/>
</dbReference>
<dbReference type="PDB" id="4P5M">
    <property type="method" value="X-ray"/>
    <property type="resolution" value="1.70 A"/>
    <property type="chains" value="B/D/F/H=33-218"/>
</dbReference>
<dbReference type="PDB" id="7T2A">
    <property type="method" value="X-ray"/>
    <property type="resolution" value="3.04 A"/>
    <property type="chains" value="B/E=30-217"/>
</dbReference>
<dbReference type="PDB" id="7T2B">
    <property type="method" value="X-ray"/>
    <property type="resolution" value="2.80 A"/>
    <property type="chains" value="B/G/L/Q=30-217"/>
</dbReference>
<dbReference type="PDB" id="7T2C">
    <property type="method" value="X-ray"/>
    <property type="resolution" value="3.10 A"/>
    <property type="chains" value="B=30-217"/>
</dbReference>
<dbReference type="PDB" id="7T2D">
    <property type="method" value="X-ray"/>
    <property type="resolution" value="3.40 A"/>
    <property type="chains" value="B/G/L/Q=30-217"/>
</dbReference>
<dbReference type="PDBsum" id="3LQZ"/>
<dbReference type="PDBsum" id="4P4K"/>
<dbReference type="PDBsum" id="4P4R"/>
<dbReference type="PDBsum" id="4P57"/>
<dbReference type="PDBsum" id="4P5K"/>
<dbReference type="PDBsum" id="4P5M"/>
<dbReference type="PDBsum" id="7T2A"/>
<dbReference type="PDBsum" id="7T2B"/>
<dbReference type="PDBsum" id="7T2C"/>
<dbReference type="PDBsum" id="7T2D"/>
<dbReference type="SMR" id="P04440"/>
<dbReference type="BioGRID" id="109360">
    <property type="interactions" value="112"/>
</dbReference>
<dbReference type="FunCoup" id="P04440">
    <property type="interactions" value="442"/>
</dbReference>
<dbReference type="IntAct" id="P04440">
    <property type="interactions" value="84"/>
</dbReference>
<dbReference type="MINT" id="P04440"/>
<dbReference type="STRING" id="9606.ENSP00000408146"/>
<dbReference type="GlyConnect" id="1366">
    <property type="glycosylation" value="7 N-Linked glycans (1 site)"/>
</dbReference>
<dbReference type="GlyCosmos" id="P04440">
    <property type="glycosylation" value="1 site, 7 glycans"/>
</dbReference>
<dbReference type="GlyGen" id="P04440">
    <property type="glycosylation" value="1 site, 44 N-linked glycans (1 site)"/>
</dbReference>
<dbReference type="iPTMnet" id="P04440"/>
<dbReference type="PhosphoSitePlus" id="P04440"/>
<dbReference type="SwissPalm" id="P04440"/>
<dbReference type="BioMuta" id="HLA-DPB1"/>
<dbReference type="DMDM" id="122263"/>
<dbReference type="jPOST" id="P04440"/>
<dbReference type="MassIVE" id="P04440"/>
<dbReference type="PaxDb" id="9606-ENSP00000408146"/>
<dbReference type="PeptideAtlas" id="P04440"/>
<dbReference type="ProteomicsDB" id="51715"/>
<dbReference type="Antibodypedia" id="28872">
    <property type="antibodies" value="595 antibodies from 37 providers"/>
</dbReference>
<dbReference type="CPTC" id="P04440">
    <property type="antibodies" value="2 antibodies"/>
</dbReference>
<dbReference type="DNASU" id="3115"/>
<dbReference type="Ensembl" id="ENST00000399500.6">
    <property type="protein sequence ID" value="ENSP00000382422.2"/>
    <property type="gene ID" value="ENSG00000215048.13"/>
</dbReference>
<dbReference type="Ensembl" id="ENST00000411749.6">
    <property type="protein sequence ID" value="ENSP00000414196.2"/>
    <property type="gene ID" value="ENSG00000236693.11"/>
</dbReference>
<dbReference type="Ensembl" id="ENST00000418931.7">
    <property type="protein sequence ID" value="ENSP00000408146.2"/>
    <property type="gene ID" value="ENSG00000223865.12"/>
</dbReference>
<dbReference type="Ensembl" id="ENST00000425130.6">
    <property type="protein sequence ID" value="ENSP00000396095.2"/>
    <property type="gene ID" value="ENSG00000230763.11"/>
</dbReference>
<dbReference type="Ensembl" id="ENST00000433800.6">
    <property type="protein sequence ID" value="ENSP00000407674.2"/>
    <property type="gene ID" value="ENSG00000226826.10"/>
</dbReference>
<dbReference type="Ensembl" id="ENST00000454006.6">
    <property type="protein sequence ID" value="ENSP00000389288.2"/>
    <property type="gene ID" value="ENSG00000237710.10"/>
</dbReference>
<dbReference type="GeneID" id="3115"/>
<dbReference type="KEGG" id="hsa:3115"/>
<dbReference type="MANE-Select" id="ENST00000418931.7">
    <property type="protein sequence ID" value="ENSP00000408146.2"/>
    <property type="RefSeq nucleotide sequence ID" value="NM_002121.6"/>
    <property type="RefSeq protein sequence ID" value="NP_002112.3"/>
</dbReference>
<dbReference type="UCSC" id="uc003ocu.3">
    <property type="organism name" value="human"/>
</dbReference>
<dbReference type="AGR" id="HGNC:4940"/>
<dbReference type="CTD" id="3115"/>
<dbReference type="DisGeNET" id="3115"/>
<dbReference type="GeneCards" id="HLA-DPB1"/>
<dbReference type="HGNC" id="HGNC:4940">
    <property type="gene designation" value="HLA-DPB1"/>
</dbReference>
<dbReference type="HPA" id="ENSG00000223865">
    <property type="expression patterns" value="Tissue enhanced (lung, lymphoid tissue)"/>
</dbReference>
<dbReference type="MalaCards" id="HLA-DPB1"/>
<dbReference type="MIM" id="142858">
    <property type="type" value="gene"/>
</dbReference>
<dbReference type="neXtProt" id="NX_P04440"/>
<dbReference type="OpenTargets" id="ENSG00000223865"/>
<dbReference type="Orphanet" id="133">
    <property type="disease" value="Chronic beryllium disease"/>
</dbReference>
<dbReference type="Orphanet" id="900">
    <property type="disease" value="Granulomatosis with polyangiitis"/>
</dbReference>
<dbReference type="PharmGKB" id="PA35064"/>
<dbReference type="VEuPathDB" id="HostDB:ENSG00000223865"/>
<dbReference type="eggNOG" id="ENOG502RYNI">
    <property type="taxonomic scope" value="Eukaryota"/>
</dbReference>
<dbReference type="GeneTree" id="ENSGT00940000162390"/>
<dbReference type="InParanoid" id="P04440"/>
<dbReference type="OMA" id="RTHPENY"/>
<dbReference type="PAN-GO" id="P04440">
    <property type="GO annotations" value="6 GO annotations based on evolutionary models"/>
</dbReference>
<dbReference type="PhylomeDB" id="P04440"/>
<dbReference type="TreeFam" id="TF336626"/>
<dbReference type="PathwayCommons" id="P04440"/>
<dbReference type="Reactome" id="R-HSA-202424">
    <property type="pathway name" value="Downstream TCR signaling"/>
</dbReference>
<dbReference type="Reactome" id="R-HSA-202427">
    <property type="pathway name" value="Phosphorylation of CD3 and TCR zeta chains"/>
</dbReference>
<dbReference type="Reactome" id="R-HSA-202430">
    <property type="pathway name" value="Translocation of ZAP-70 to Immunological synapse"/>
</dbReference>
<dbReference type="Reactome" id="R-HSA-202433">
    <property type="pathway name" value="Generation of second messenger molecules"/>
</dbReference>
<dbReference type="Reactome" id="R-HSA-2132295">
    <property type="pathway name" value="MHC class II antigen presentation"/>
</dbReference>
<dbReference type="Reactome" id="R-HSA-389948">
    <property type="pathway name" value="Co-inhibition by PD-1"/>
</dbReference>
<dbReference type="Reactome" id="R-HSA-877300">
    <property type="pathway name" value="Interferon gamma signaling"/>
</dbReference>
<dbReference type="SignaLink" id="P04440"/>
<dbReference type="SIGNOR" id="P04440"/>
<dbReference type="BioGRID-ORCS" id="3115">
    <property type="hits" value="15 hits in 1136 CRISPR screens"/>
</dbReference>
<dbReference type="ChiTaRS" id="HLA-DPB1">
    <property type="organism name" value="human"/>
</dbReference>
<dbReference type="EvolutionaryTrace" id="P04440"/>
<dbReference type="GeneWiki" id="HLA-DPB1"/>
<dbReference type="GenomeRNAi" id="3115"/>
<dbReference type="Pharos" id="P04440">
    <property type="development level" value="Tbio"/>
</dbReference>
<dbReference type="PRO" id="PR:P04440"/>
<dbReference type="Proteomes" id="UP000005640">
    <property type="component" value="Chromosome 6"/>
</dbReference>
<dbReference type="RNAct" id="P04440">
    <property type="molecule type" value="protein"/>
</dbReference>
<dbReference type="Bgee" id="ENSG00000223865">
    <property type="expression patterns" value="Expressed in granulocyte and 105 other cell types or tissues"/>
</dbReference>
<dbReference type="ExpressionAtlas" id="P04440">
    <property type="expression patterns" value="baseline and differential"/>
</dbReference>
<dbReference type="GO" id="GO:0009986">
    <property type="term" value="C:cell surface"/>
    <property type="evidence" value="ECO:0000315"/>
    <property type="project" value="UniProtKB"/>
</dbReference>
<dbReference type="GO" id="GO:0030669">
    <property type="term" value="C:clathrin-coated endocytic vesicle membrane"/>
    <property type="evidence" value="ECO:0000304"/>
    <property type="project" value="Reactome"/>
</dbReference>
<dbReference type="GO" id="GO:0030666">
    <property type="term" value="C:endocytic vesicle membrane"/>
    <property type="evidence" value="ECO:0000304"/>
    <property type="project" value="Reactome"/>
</dbReference>
<dbReference type="GO" id="GO:0012507">
    <property type="term" value="C:ER to Golgi transport vesicle membrane"/>
    <property type="evidence" value="ECO:0000304"/>
    <property type="project" value="Reactome"/>
</dbReference>
<dbReference type="GO" id="GO:0000139">
    <property type="term" value="C:Golgi membrane"/>
    <property type="evidence" value="ECO:0000304"/>
    <property type="project" value="Reactome"/>
</dbReference>
<dbReference type="GO" id="GO:0031902">
    <property type="term" value="C:late endosome membrane"/>
    <property type="evidence" value="ECO:0000318"/>
    <property type="project" value="GO_Central"/>
</dbReference>
<dbReference type="GO" id="GO:0098553">
    <property type="term" value="C:lumenal side of endoplasmic reticulum membrane"/>
    <property type="evidence" value="ECO:0000304"/>
    <property type="project" value="Reactome"/>
</dbReference>
<dbReference type="GO" id="GO:0005765">
    <property type="term" value="C:lysosomal membrane"/>
    <property type="evidence" value="ECO:0000318"/>
    <property type="project" value="GO_Central"/>
</dbReference>
<dbReference type="GO" id="GO:0016020">
    <property type="term" value="C:membrane"/>
    <property type="evidence" value="ECO:0007005"/>
    <property type="project" value="UniProtKB"/>
</dbReference>
<dbReference type="GO" id="GO:0042613">
    <property type="term" value="C:MHC class II protein complex"/>
    <property type="evidence" value="ECO:0000314"/>
    <property type="project" value="UniProtKB"/>
</dbReference>
<dbReference type="GO" id="GO:0005886">
    <property type="term" value="C:plasma membrane"/>
    <property type="evidence" value="ECO:0000304"/>
    <property type="project" value="Reactome"/>
</dbReference>
<dbReference type="GO" id="GO:0032588">
    <property type="term" value="C:trans-Golgi network membrane"/>
    <property type="evidence" value="ECO:0000304"/>
    <property type="project" value="Reactome"/>
</dbReference>
<dbReference type="GO" id="GO:0030658">
    <property type="term" value="C:transport vesicle membrane"/>
    <property type="evidence" value="ECO:0000304"/>
    <property type="project" value="Reactome"/>
</dbReference>
<dbReference type="GO" id="GO:0023026">
    <property type="term" value="F:MHC class II protein complex binding"/>
    <property type="evidence" value="ECO:0000318"/>
    <property type="project" value="GO_Central"/>
</dbReference>
<dbReference type="GO" id="GO:0042605">
    <property type="term" value="F:peptide antigen binding"/>
    <property type="evidence" value="ECO:0000314"/>
    <property type="project" value="UniProtKB"/>
</dbReference>
<dbReference type="GO" id="GO:0002250">
    <property type="term" value="P:adaptive immune response"/>
    <property type="evidence" value="ECO:0007669"/>
    <property type="project" value="UniProtKB-KW"/>
</dbReference>
<dbReference type="GO" id="GO:0019886">
    <property type="term" value="P:antigen processing and presentation of exogenous peptide antigen via MHC class II"/>
    <property type="evidence" value="ECO:0000314"/>
    <property type="project" value="UniProtKB"/>
</dbReference>
<dbReference type="GO" id="GO:0002503">
    <property type="term" value="P:peptide antigen assembly with MHC class II protein complex"/>
    <property type="evidence" value="ECO:0000318"/>
    <property type="project" value="GO_Central"/>
</dbReference>
<dbReference type="GO" id="GO:0050778">
    <property type="term" value="P:positive regulation of immune response"/>
    <property type="evidence" value="ECO:0000318"/>
    <property type="project" value="GO_Central"/>
</dbReference>
<dbReference type="GO" id="GO:0050870">
    <property type="term" value="P:positive regulation of T cell activation"/>
    <property type="evidence" value="ECO:0000315"/>
    <property type="project" value="UniProtKB"/>
</dbReference>
<dbReference type="GO" id="GO:0042102">
    <property type="term" value="P:positive regulation of T cell proliferation"/>
    <property type="evidence" value="ECO:0000315"/>
    <property type="project" value="UniProtKB"/>
</dbReference>
<dbReference type="GO" id="GO:0032729">
    <property type="term" value="P:positive regulation of type II interferon production"/>
    <property type="evidence" value="ECO:0000315"/>
    <property type="project" value="UniProtKB"/>
</dbReference>
<dbReference type="GO" id="GO:0050852">
    <property type="term" value="P:T cell receptor signaling pathway"/>
    <property type="evidence" value="ECO:0000314"/>
    <property type="project" value="UniProtKB"/>
</dbReference>
<dbReference type="CDD" id="cd21003">
    <property type="entry name" value="IgC1_MHC_II_beta_HLA-DP"/>
    <property type="match status" value="1"/>
</dbReference>
<dbReference type="FunFam" id="2.60.40.10:FF:000116">
    <property type="entry name" value="HLA class II histocompatibility antigen, DRB1-1 beta chain"/>
    <property type="match status" value="1"/>
</dbReference>
<dbReference type="FunFam" id="3.10.320.10:FF:000001">
    <property type="entry name" value="HLA class II histocompatibility antigen, DRB1-1 beta chain"/>
    <property type="match status" value="1"/>
</dbReference>
<dbReference type="Gene3D" id="3.10.320.10">
    <property type="entry name" value="Class II Histocompatibility Antigen, M Beta Chain, Chain B, domain 1"/>
    <property type="match status" value="1"/>
</dbReference>
<dbReference type="Gene3D" id="2.60.40.10">
    <property type="entry name" value="Immunoglobulins"/>
    <property type="match status" value="1"/>
</dbReference>
<dbReference type="InterPro" id="IPR007110">
    <property type="entry name" value="Ig-like_dom"/>
</dbReference>
<dbReference type="InterPro" id="IPR036179">
    <property type="entry name" value="Ig-like_dom_sf"/>
</dbReference>
<dbReference type="InterPro" id="IPR013783">
    <property type="entry name" value="Ig-like_fold"/>
</dbReference>
<dbReference type="InterPro" id="IPR003006">
    <property type="entry name" value="Ig/MHC_CS"/>
</dbReference>
<dbReference type="InterPro" id="IPR003597">
    <property type="entry name" value="Ig_C1-set"/>
</dbReference>
<dbReference type="InterPro" id="IPR050160">
    <property type="entry name" value="MHC/Immunoglobulin"/>
</dbReference>
<dbReference type="InterPro" id="IPR011162">
    <property type="entry name" value="MHC_I/II-like_Ag-recog"/>
</dbReference>
<dbReference type="InterPro" id="IPR014745">
    <property type="entry name" value="MHC_II_a/b_N"/>
</dbReference>
<dbReference type="InterPro" id="IPR000353">
    <property type="entry name" value="MHC_II_b_N"/>
</dbReference>
<dbReference type="PANTHER" id="PTHR19944:SF46">
    <property type="entry name" value="HLA CLASS II HISTOCOMPATIBILITY ANTIGEN, DP BETA 1 CHAIN"/>
    <property type="match status" value="1"/>
</dbReference>
<dbReference type="PANTHER" id="PTHR19944">
    <property type="entry name" value="MHC CLASS II-RELATED"/>
    <property type="match status" value="1"/>
</dbReference>
<dbReference type="Pfam" id="PF07654">
    <property type="entry name" value="C1-set"/>
    <property type="match status" value="1"/>
</dbReference>
<dbReference type="Pfam" id="PF00969">
    <property type="entry name" value="MHC_II_beta"/>
    <property type="match status" value="1"/>
</dbReference>
<dbReference type="SMART" id="SM00407">
    <property type="entry name" value="IGc1"/>
    <property type="match status" value="1"/>
</dbReference>
<dbReference type="SMART" id="SM00921">
    <property type="entry name" value="MHC_II_beta"/>
    <property type="match status" value="1"/>
</dbReference>
<dbReference type="SUPFAM" id="SSF48726">
    <property type="entry name" value="Immunoglobulin"/>
    <property type="match status" value="1"/>
</dbReference>
<dbReference type="SUPFAM" id="SSF54452">
    <property type="entry name" value="MHC antigen-recognition domain"/>
    <property type="match status" value="1"/>
</dbReference>
<dbReference type="PROSITE" id="PS50835">
    <property type="entry name" value="IG_LIKE"/>
    <property type="match status" value="1"/>
</dbReference>
<dbReference type="PROSITE" id="PS00290">
    <property type="entry name" value="IG_MHC"/>
    <property type="match status" value="1"/>
</dbReference>
<accession>P04440</accession>
<accession>A0PFJ7</accession>
<accession>A5I886</accession>
<accession>A8YPB3</accession>
<accession>B5U8B4</accession>
<accession>B7VF80</accession>
<accession>B7VF87</accession>
<accession>B8ZX68</accession>
<accession>B8ZYT0</accession>
<accession>B9W5S8</accession>
<accession>B9W6F7</accession>
<accession>B9W6F9</accession>
<accession>C0MPP5</accession>
<accession>C0MPQ2</accession>
<accession>C0MPQ3</accession>
<accession>C0MPQ5</accession>
<accession>C0MPQ6</accession>
<accession>C0MPQ7</accession>
<accession>C4R9J5</accession>
<accession>C5IZL1</accession>
<accession>O00259</accession>
<accession>O19698</accession>
<accession>O19700</accession>
<accession>O19702</accession>
<accession>O19749</accession>
<accession>O46884</accession>
<accession>O77952</accession>
<accession>O98215</accession>
<accession>O98216</accession>
<accession>O98217</accession>
<accession>O98218</accession>
<accession>O98219</accession>
<accession>O98222</accession>
<accession>O98223</accession>
<accession>P01916</accession>
<accession>P04232</accession>
<accession>P13763</accession>
<accession>P79493</accession>
<accession>P79608</accession>
<accession>Q0P0L4</accession>
<accession>Q0ZFN3</accession>
<accession>Q14279</accession>
<accession>Q27S71</accession>
<accession>Q29682</accession>
<accession>Q29684</accession>
<accession>Q29698</accession>
<accession>Q29714</accession>
<accession>Q29775</accession>
<accession>Q29776</accession>
<accession>Q29778</accession>
<accession>Q29779</accession>
<accession>Q29781</accession>
<accession>Q29827</accession>
<accession>Q29828</accession>
<accession>Q29879</accession>
<accession>Q29880</accession>
<accession>Q29898</accession>
<accession>Q29977</accession>
<accession>Q2MGW3</accession>
<accession>Q30015</accession>
<accession>Q30031</accession>
<accession>Q30032</accession>
<accession>Q30033</accession>
<accession>Q30034</accession>
<accession>Q30050</accession>
<accession>Q30051</accession>
<accession>Q30052</accession>
<accession>Q30053</accession>
<accession>Q30054</accession>
<accession>Q30055</accession>
<accession>Q30174</accession>
<accession>Q4GY31</accession>
<accession>Q4JHD8</accession>
<accession>Q5ENE0</accession>
<accession>Q5ENE1</accession>
<accession>Q5ENW3</accession>
<accession>Q5EP46</accession>
<accession>Q5EP47</accession>
<accession>Q5EP49</accession>
<accession>Q5EP51</accession>
<accession>Q5EP52</accession>
<accession>Q5EP53</accession>
<accession>Q5EP56</accession>
<accession>Q5I4H8</accession>
<accession>Q5I4H9</accession>
<accession>Q5ISH4</accession>
<accession>Q5ISH5</accession>
<accession>Q5SQ73</accession>
<accession>Q5STP2</accession>
<accession>Q5YLA6</accession>
<accession>Q6IVX1</accession>
<accession>Q6LBX2</accession>
<accession>Q6LBX3</accession>
<accession>Q6LBX4</accession>
<accession>Q6LBX5</accession>
<accession>Q6LBX6</accession>
<accession>Q6LBX7</accession>
<accession>Q6PWX6</accession>
<accession>Q6TAS4</accession>
<accession>Q714U1</accession>
<accession>Q714U2</accession>
<accession>Q7YQ10</accession>
<accession>Q860Z7</accession>
<accession>Q8HWL7</accession>
<accession>Q8HWT5</accession>
<accession>Q8SNC4</accession>
<accession>Q95HC1</accession>
<accession>Q95IT7</accession>
<accession>Q95IT8</accession>
<accession>Q9BD13</accession>
<accession>Q9GIM2</accession>
<accession>Q9GIM4</accession>
<accession>Q9GIX6</accession>
<accession>Q9GJ41</accession>
<accession>Q9MY67</accession>
<accession>Q9TNT7</accession>
<accession>Q9TQE2</accession>
<accession>Q9XS11</accession>
<accession>Q9XS12</accession>
<keyword id="KW-0002">3D-structure</keyword>
<keyword id="KW-1064">Adaptive immunity</keyword>
<keyword id="KW-1003">Cell membrane</keyword>
<keyword id="KW-1015">Disulfide bond</keyword>
<keyword id="KW-0256">Endoplasmic reticulum</keyword>
<keyword id="KW-0967">Endosome</keyword>
<keyword id="KW-0325">Glycoprotein</keyword>
<keyword id="KW-0333">Golgi apparatus</keyword>
<keyword id="KW-0391">Immunity</keyword>
<keyword id="KW-0458">Lysosome</keyword>
<keyword id="KW-0472">Membrane</keyword>
<keyword id="KW-0491">MHC II</keyword>
<keyword id="KW-1267">Proteomics identification</keyword>
<keyword id="KW-1185">Reference proteome</keyword>
<keyword id="KW-0732">Signal</keyword>
<keyword id="KW-0812">Transmembrane</keyword>
<keyword id="KW-1133">Transmembrane helix</keyword>
<gene>
    <name type="primary">HLA-DPB1</name>
    <name type="synonym">HLA-DP1B</name>
</gene>
<feature type="signal peptide">
    <location>
        <begin position="1"/>
        <end position="29"/>
    </location>
</feature>
<feature type="chain" id="PRO_0000018984" description="HLA class II histocompatibility antigen, DP beta 1 chain">
    <location>
        <begin position="30"/>
        <end position="258"/>
    </location>
</feature>
<feature type="topological domain" description="Extracellular" evidence="1">
    <location>
        <begin position="30"/>
        <end position="225"/>
    </location>
</feature>
<feature type="transmembrane region" description="Helical" evidence="1">
    <location>
        <begin position="226"/>
        <end position="246"/>
    </location>
</feature>
<feature type="topological domain" description="Cytoplasmic" evidence="1">
    <location>
        <begin position="247"/>
        <end position="258"/>
    </location>
</feature>
<feature type="domain" description="Ig-like C1-type">
    <location>
        <begin position="124"/>
        <end position="212"/>
    </location>
</feature>
<feature type="region of interest" description="Beta-1">
    <location>
        <begin position="30"/>
        <end position="121"/>
    </location>
</feature>
<feature type="region of interest" description="Beta-2">
    <location>
        <begin position="122"/>
        <end position="215"/>
    </location>
</feature>
<feature type="region of interest" description="Connecting peptide">
    <location>
        <begin position="216"/>
        <end position="225"/>
    </location>
</feature>
<feature type="glycosylation site" description="N-linked (GlcNAc...) asparagine" evidence="1">
    <location>
        <position position="48"/>
    </location>
</feature>
<feature type="disulfide bond" evidence="2">
    <location>
        <begin position="44"/>
        <end position="106"/>
    </location>
</feature>
<feature type="disulfide bond" evidence="2">
    <location>
        <begin position="144"/>
        <end position="200"/>
    </location>
</feature>
<feature type="sequence variant" id="VAR_060627" description="In allele DPB1*09:02; dbSNP:rs41558014.">
    <original>T</original>
    <variation>M</variation>
    <location>
        <position position="16"/>
    </location>
</feature>
<feature type="sequence variant" id="VAR_060628" description="In dbSNP:rs11551416.">
    <original>T</original>
    <variation>I</variation>
    <location>
        <position position="24"/>
    </location>
</feature>
<feature type="sequence variant" id="VAR_060629" description="In allele DPB1*75:01.">
    <original>R</original>
    <variation>P</variation>
    <location>
        <position position="30"/>
    </location>
</feature>
<feature type="sequence variant" id="VAR_060630" description="In allele DPB1*75:01; requires 2 nucleotide substitutions.">
    <original>A</original>
    <variation>L</variation>
    <location>
        <position position="31"/>
    </location>
</feature>
<feature type="sequence variant" id="VAR_060631" description="In allele DPB1*75:01.">
    <original>T</original>
    <variation>P</variation>
    <location>
        <position position="32"/>
    </location>
</feature>
<feature type="sequence variant" id="VAR_060632" description="In allele DPB1*75:01.">
    <original>P</original>
    <variation>A</variation>
    <location>
        <position position="33"/>
    </location>
</feature>
<feature type="sequence variant" id="VAR_060633" description="In allele DPB1*01:01, allele DPB1*03:01, allele DPB1*05:02, allele DPB1*06:01, allele DPB1*09:01, allele DPB1*09:02, allele DPB1*10:01, allele DPB1*11:01, allele DPB1*11:02, allele DPB1*13:01, allele DPB1*13:02, allele DPB1*14:01, allele DPB1*14:02, allele DPB1*15:01, allele DPB1*16:02, allele DPB1*17:01, allele DPB1*17:02, allele DPB1*18:01, allele DPB1*20:02, allele DPB1*21:01, allele DPB1*21:02, allele DPB1*20:01, allele DPB1*22:02, allele DPB1*25:01, allele DPB1*25:02, allele DPB1*26:01, allele DPB1*27:01, allele DPB1*29:01, allele DPB1*30:01, allele DPB1*35:01, allele DPB1*36:01, allele DPB1*37:01, allele DPB1*44:01, allele DPB1*45:01, allele DPB1*50:01, allele DPB1*52:01, allele DPB1*54:01, allele DPB1*55:01, allele DPB1*56:01, allele DPB1*58:01, allele DPB1*66:01, allele DPB1*67:01, allele DPB1*69:01, allele DPB1*70:01, allele DPB1*74:01, allele DPB1*76:01, allele DPB1*78:01, allele DPB1*79:01, allele DPB1*85:01, allele DPB1*86:01, allele DPB1*87:01, allele DPB1*88:01, allele DPB1*89:01, allele DPB1*90:01, allele DPB1*91:01, allele DPB1*92:01, allele DPB1*93:01 and allele DPB1*98:01; dbSNP:rs1126504.">
    <original>L</original>
    <variation>V</variation>
    <location>
        <position position="37"/>
    </location>
</feature>
<feature type="sequence variant" id="VAR_060635" description="In allele DPB1*70:01; requires 2 nucleotide substitutions.">
    <original>F</original>
    <variation>D</variation>
    <location>
        <position position="38"/>
    </location>
</feature>
<feature type="sequence variant" id="VAR_060634" description="In allele DPB1*09:01, allele DPB1*10:01, allele DPB1*14:01, allele DPB1*16:02, allele DPB1*17:01, allele DPB1*22:02, allele DPB1*30:01, allele DPB1*35:01, allele DPB1*45:01, allele DPB1*54:01, allele DPB1*55:01, allele DPB1*58:01, allele DPB1*66:01, allele DPB1*67:01, allele DPB1*76:01, allele DPB1*86:01, allele DPB1*91:01 and allele DPB1*98:01; requires 2 nucleotide substitutions.">
    <original>F</original>
    <variation>H</variation>
    <location>
        <position position="38"/>
    </location>
</feature>
<feature type="sequence variant" id="VAR_060636" description="In dbSNP:rs12722013.">
    <original>F</original>
    <variation>L</variation>
    <location>
        <position position="38"/>
    </location>
</feature>
<feature type="sequence variant" id="VAR_033433" description="In allele DPB1*01:01, allele DPB1*03:01, allele DPB1*05:02, allele DPB1*06:01, allele DPB1*09:02, allele DPB1*11:01, allele DPB1*11:02, allele DPB1*13:01, allele DPB1*13:02, allele DPB1*14:02, allele DPB1*15:01, allele DPB1*17:02, allele DPB1*18:01, allele DPB1*20:02, allele DPB1*21:01, allele DPB1*21:02, allele DPB1*20:01, allele DPB1*25:01, allele DPB1*25:02, allele DPB1*26:01, allele DPB1*27:01, allele DPB1*29:01, allele DPB1*36:01, allele DPB1*37:01, allele DPB1*44:01, allele DPB1*50:01, allele DPB1*52:01, allele DPB1*56:01, allele DPB1*69:01, allele DPB1*74:01, allele DPB1*78:01, allele DPB1*79:01, allele DPB1*85:01, allele DPB1*87:01, allele DPB1*88:01, allele DPB1*89:01, allele DPB1*90:01, allele DPB1*92:01 and allele DPB1*93:01; dbSNP:rs1126509.">
    <original>F</original>
    <variation>Y</variation>
    <location>
        <position position="38"/>
    </location>
</feature>
<feature type="sequence variant" id="VAR_060637" description="In allele DPB1*03:01, allele DPB1*05:02, allele DPB1*06:01, allele DPB1*09:01, allele DPB1*09:02, allele DPB1*10:01, allele DPB1*11:01, allele DPB1*11:02, allele DPB1*13:01, allele DPB1*13:02, allele DPB1*14:01, allele DPB1*14:02, allele DPB1*16:02, allele DPB1*17:01, allele DPB1*17:02, allele DPB1*20:02, allele DPB1*21:01, allele DPB1*20:01, allele DPB1*22:02, allele DPB1*25:01, allele DPB1*26:01, allele DPB1*27:01, allele DPB1*29:01, allele DPB1*30:01, allele DPB1*35:01, allele DPB1*36:01, allele DPB1*37:01, allele DPB1*44:01, allele DPB1*45:01, allele DPB1*52:01, allele DPB1*54:01, allele DPB1*55:01, allele DPB1*56:01, allele DPB1*58:01, allele DPB1*66:01, allele DPB1*67:01, allele DPB1*69:01, allele DPB1*70:01, allele DPB1*74:01, allele DPB1*76:01, allele DPB1*78:01, allele DPB1*79:01, allele DPB1*85:01, allele DPB1*86:01, allele DPB1*87:01, allele DPB1*88:01, allele DPB1*91:01, allele DPB1*92:01, allele DPB1*93:01 and allele DPB1*98:01; requires 2 nucleotide substitutions; dbSNP:rs386699869.">
    <original>G</original>
    <variation>L</variation>
    <location>
        <position position="40"/>
    </location>
</feature>
<feature type="sequence variant" id="VAR_033434" description="In dbSNP:rs1126513.">
    <original>G</original>
    <variation>V</variation>
    <location>
        <position position="40"/>
    </location>
</feature>
<feature type="sequence variant" id="VAR_060638" description="In allele DPB1*77:01; dbSNP:rs41540313.">
    <original>R</original>
    <variation>L</variation>
    <location>
        <position position="41"/>
    </location>
</feature>
<feature type="sequence variant" id="VAR_060639" description="In allele DPB1*26:02; dbSNP:rs1424116907.">
    <original>C</original>
    <variation>G</variation>
    <location>
        <position position="44"/>
    </location>
</feature>
<feature type="sequence variant" id="VAR_060640" description="In allele DPB1*38:01; dbSNP:rs41555313.">
    <original>A</original>
    <variation>P</variation>
    <location>
        <position position="46"/>
    </location>
</feature>
<feature type="sequence variant" id="VAR_060641" description="In allele DPB1*18:02; dbSNP:rs41555313.">
    <original>A</original>
    <variation>T</variation>
    <location>
        <position position="46"/>
    </location>
</feature>
<feature type="sequence variant" id="VAR_060642" description="In allele DPB1*99:01; dbSNP:rs41553416.">
    <original>Y</original>
    <variation>D</variation>
    <location>
        <position position="57"/>
    </location>
</feature>
<feature type="sequence variant" id="VAR_060643" description="In allele DPB1*14:02 and allele DPB1*21:02; dbSNP:rs41561114.">
    <original>R</original>
    <variation>P</variation>
    <location>
        <position position="61"/>
    </location>
</feature>
<feature type="sequence variant" id="VAR_033435" description="Ind allele DPB1*11:01, allele DPB1*15:01 and allele DPB1*74:01; dbSNP:rs12722018.">
    <original>E</original>
    <variation>Q</variation>
    <location>
        <position position="62"/>
    </location>
</feature>
<feature type="sequence variant" id="VAR_060644" description="In allele DPB1*02:02, allele DPB1*02:03, allele DPB1*05:01, allele DPB1*15:02, allele DPB1*17:02, allele DPB1*19:02, allele DPB1*21:01, allele DPB1*21:01, allele DPB1*22:01, allele DPB1*34:01, allele DPB1*36:01, allele DPB1*38:01, allele DPB1*44:01, allele DPB1*48:01, allele DPB1*58:01, allele DPB1*62:01, allele DPB1*63:01, allele DPB1*95:01 and allele DPB1*97:01; dbSNP:rs9277348.">
    <original>F</original>
    <variation>L</variation>
    <location>
        <position position="64"/>
    </location>
</feature>
<feature type="sequence variant" id="VAR_033436" description="In allele DPB1*01:01, allele DPB1*01:02, allele DPB1*09:02, allele DPB1*11:01, allele DPB1*13:01, allele DPB1*15:01, allele DPB1*20:02, allele DPB1*21:02, allele DPB1*25:02, allele DPB1*26:01, allele DPB1*27:01, allele DPB1*39:01, allele DPB1*40:01, allele DPB1*49:01, allele DPB1*53:01, allele DPB1*65:01, allele DPB1*74:01, allele DPB1*85:01, allele DPB1*89:01 and allele DPB1*96:01; dbSNP:rs1042117.">
    <original>F</original>
    <variation>Y</variation>
    <location>
        <position position="64"/>
    </location>
</feature>
<feature type="sequence variant" id="VAR_033437" description="In allele DPB1*01:02, allele DPB1*02:01, allele DPB1*02:02, allele DPB1*02:03, allele DPB1*03:01, allele DPB1*04:02, allele DPB1*04:03, allele DPB1*05:01, allele DPB1*05:02, allele DPB1*06:01, allele DPB1*06:02, allele DPB1*08:01, allele DPB1*08:02, allele DPB1*09:01, allele DPB1*10:01, allele DPB1*10:02, allele DPB1*11:02, allele DPB1*14:01, allele DPB1*14:02, allele DPB1*15:02, allele DPB1*16:01, allele DPB1*16:02, allele DPB1*17:01, allele DPB1*17:02, allele DPB1*18:01, allele DPB1*18:02, allele DPB1*19:01, allele DPB1*19:02, allele DPB1*21:01, allele DPB1*20:01, allele DPB1*22:01, allele DPB1*22:02, allele DPB1*23:01, allele DPB1*25:01, allele DPB1*26:02, allele DPB1*29:01, allele DPB1*30:01, allele DPB1*32:01, allele DPB1*34:01, allele DPB1*35:01, allele DPB1*36:01, allele DPB1*37:01, allele DPB1*38:01, allele DPB1*41:01, allele DPB1*44:01, allele DPB1*45:01, allele DPB1*46:01, allele DPB1*47:01, allele DPB1*48:01, allele DPB1*50:01, allele DPB1*52:01, allele DPB1*54:01, allele DPB1*55:01, allele DPB1*57:01, allele DPB1*58:01, allele DPB1*59:01, allele DPB1*60:01, allele DPB1*62:01, allele DPB1*63:01, allele DPB1*67:01, allele DPB1*68:01, allele DPB1*69:01, allele DPB1*70:01, allele DPB1*71:01, allele DPB1*73:01, allele DPB1*75:01, allele DPB1*77:01, allele DPB1*78:01, allele DPB1*79:01, allele DPB1*80:01, allele DPB1*82:01, allele DPB1*83:01, allele DPB1*84:01, allele DPB1*86:01, allele DPB1*87:01, allele DPB1*88:01, allele DPB1*91:01, allele DPB1*93:01, allele DPB1*94:01, allele DPB1*95:01, allele DPB1*97:01 and allele DPB1*98:01; dbSNP:rs1042121.">
    <original>A</original>
    <variation>V</variation>
    <location>
        <position position="65"/>
    </location>
</feature>
<feature type="sequence variant" id="VAR_060645" description="In allele DPB1*24:02; dbSNP:rs77062860.">
    <original>D</original>
    <variation>Y</variation>
    <location>
        <position position="68"/>
    </location>
</feature>
<feature type="sequence variant" id="VAR_060646" description="In allele DPB1*97:01; dbSNP:rs41552915.">
    <original>G</original>
    <variation>W</variation>
    <location>
        <position position="72"/>
    </location>
</feature>
<feature type="sequence variant" id="VAR_054662" description="In allele DPB1*02:01, allele DPB1*03:01, allele DPB1*04:02, allele DPB1*05:02, allele DPB1*06:01, allele DPB1*06:02, allele DPB1*08:01, allele DPB1*09:01, allele DPB1*10:01, allele DPB1*10:02, allele DPB1*11:02, allele DPB1*14:01, allele DPB1*14:02, allele DPB1*16:01, allele DPB1*16:02, allele DPB1*17:01, allele DPB1*18:01, allele DPB1*18:01, allele DPB1*18:02, allele DPB1*19:02, allele DPB1*20:01, allele DPB1*22:02, allele DPB1*25:01, allele DPB1*25:02, allele DPB1*26:02, allele DPB1*28:01, allele DPB1*29:01, allele DPB1*32:01, allele DPB1*35:01, allele DPB1*37:01, allele DPB1*41:01, allele DPB1*44:01, allele DPB1*45:01, allele DPB1*46:01, allele DPB1*48:01, allele DPB1*49:01, allele DPB1*50:01, allele DPB1*51:01, allele DPB1*53:01, allele DPB1*57:01, allele DPB1*59:01, allele DPB1*60:01, allele DPB1*68:01, allele DPB1*69:01, allele DPB1*70:01, allele DPB1*73:01, allele DPB1*75:01, allele DPB1*76:01, allele DPB1*77:01, allele DPB1*78:01, allele DPB1*79:01, allele DPB1*80:01, allele DPB1*81:01, allele DPB1*82:01, allele DPB1*83:01, allele DPB1*86:01, allele DPB1*88:01, allele DPB1*91:01, allele DPB1*92:01, allele DPB1*93:01, allele DPB1*94:01 and allele DPB1*98:01; dbSNP:rs707958.">
    <original>A</original>
    <variation>D</variation>
    <location>
        <position position="84"/>
    </location>
</feature>
<feature type="sequence variant" id="VAR_060647" description="In allele DPB1*01:02, allele DPB1*02:02, allele DPB1*02:03, allele DPB1*05:01, allele DPB1*08:02, allele DPB1*17:02, allele DPB1*19:01, allele DPB1*21:01, allele DPB1*22:01, allele DPB1*24:01, allele DPB1*30:01, allele DPB1*36:01, allele DPB1*38:01, allele DPB1*47:01, allele DPB1*54:01, allele DPB1*84:01 and allele DPB1*97:01; dbSNP:rs386699870.">
    <original>A</original>
    <variation>E</variation>
    <location>
        <position position="84"/>
    </location>
</feature>
<feature type="sequence variant" id="VAR_059511" description="In dbSNP:rs707958.">
    <original>A</original>
    <variation>V</variation>
    <location>
        <position position="84"/>
    </location>
</feature>
<feature type="sequence variant" id="VAR_033438" description="In allele DPB1*02:01, allele DPB1*03:01, allele DPB1*04:02, allele DPB1*05:02, allele DPB1*06:01, allele DPB1*06:02, allele DPB1*08:01, allele DPB1*09:01, allele DPB1*10:01, allele DPB1*10:02, allele DPB1*11:02, allele DPB1*14:01, allele DPB1*14:02, allele DPB1*16:01, allele DPB1*16:02, allele DPB1*17:01, allele DPB1*18:01, allele DPB1*18:02, allele DPB1*19:02, allele DPB1*20:01, allele DPB1*22:02, allele DPB1*25:01, allele DPB1*25:02, allele DPB1*26:02, allele DPB1*28:01, allele DPB1*29:01, allele DPB1*32:01, allele DPB1*35:01, allele DPB1*37:01, allele DPB1*41:01, allele DPB1*44:01, allele DPB1*45:01, allele DPB1*46:01, allele DPB1*48:01, allele DPB1*49:01, allele DPB1*50:01, allele DPB1*51:01, allele DPB1*53:01, allele DPB1*57:01, allele DPB1*59:01, allele DPB1*60:01, allele DPB1*68:01, allele DPB1*69:01, allele DPB1*70:01, allele DPB1*73:01, allele DPB1*75:01, allele DPB1*76:01, allele DPB1*77:01, allele DPB1*78:01, allele DPB1*79:01, allele DPB1*80:01, allele DPB1*81:01, allele DPB1*82:01, allele DPB1*83:01, allele DPB1*84:01, allele DPB1*86:01, allele DPB1*88:01, allele DPB1*91:01, allele DPB1*92:01, allele DPB1*93:01, allele DPB1*94:01 and allele DPB1*98:01; dbSNP:rs1042131.">
    <original>A</original>
    <variation>E</variation>
    <location>
        <position position="85"/>
    </location>
</feature>
<feature type="sequence variant" id="VAR_033439" description="In allele DPB1*03:01, allele DPB1*05:02, allele DPB1*06:01, allele DPB1*09:01, allele DPB1*10:02, allele DPB1*14:01, allele DPB1*14:02, allele DPB1*17:01, allele DPB1*20:01, allele DPB1*22:02, allele DPB1*29:01, allele DPB1*35:01, allele DPB1*44:01, allele DPB1*46:01, allele DPB1*50:01, allele DPB1*57:01, allele DPB1*69:01, allele DPB1*70:01, allele DPB1*76:01, allele DPB1*78:01, allele DPB1*80:01, allele DPB1*86:01, allele DPB1*88:01, allele DPB1*91:01, allele DPB1*92:01 and allele DPB1*98:01; dbSNP:rs1042133.">
    <original>E</original>
    <variation>D</variation>
    <location>
        <position position="86"/>
    </location>
</feature>
<feature type="sequence variant" id="VAR_060648" description="In allele DPB1*32:01; dbSNP:rs41545212.">
    <original>E</original>
    <variation>V</variation>
    <location>
        <position position="86"/>
    </location>
</feature>
<feature type="sequence variant" id="VAR_060649" description="In allele DPB1*02:03; dbSNP:rs41550319.">
    <original>N</original>
    <variation>H</variation>
    <location>
        <position position="89"/>
    </location>
</feature>
<feature type="sequence variant" id="VAR_060650" description="In allele DPB1*96:01; dbSNP:rs41560812.">
    <original>D</original>
    <variation>H</variation>
    <location>
        <position position="93"/>
    </location>
</feature>
<feature type="sequence variant" id="VAR_059512" description="Allele DPB1*41:01 and allele DPB1*83:01; dbSNP:rs1042136.">
    <original>I</original>
    <variation>F</variation>
    <location>
        <position position="94"/>
    </location>
</feature>
<feature type="sequence variant" id="VAR_059513" description="In allele DPB1*03:01, allele DPB1*03:02, allele DPB1*05:02, allele DPB1*06:01, allele DPB1*10:02, allele DPB1*11:01, allele DPB1*14:01, allele DPB1*14:02, allele DPB1*15:01, allele DPB1*17:02, allele DPB1*20:01, allele DPB1*22:02, allele DPB1*25:01, allele DPB1*28:01, allele DPB1*29:01, allele DPB1*31:01, allele DPB1*34:01, allele DPB1*44:01, allele DPB1*45:01, allele DPB1*50:01, allele DPB1*52:01, allele DPB1*56:01, allele DPB1*57:01, allele DPB1*59:01, allele DPB1*67:01, allele DPB1*69:01, allele DPB1*70:01, allele DPB1*72:01, allele DPB1*73:01, allele DPB1*74:01, allele DPB1*76:01, allele DPB1*78:01, allele DPB1*87:01, allele DPB1*91:01, allele DPB1*92:01 and allele DPB1*95:01; dbSNP:rs1042136." evidence="3">
    <original>I</original>
    <variation>L</variation>
    <location>
        <position position="94"/>
    </location>
</feature>
<feature type="sequence variant" id="VAR_060651" description="In allele DPB1*60:01; dbSNP:rs41547212.">
    <original>I</original>
    <variation>N</variation>
    <location>
        <position position="94"/>
    </location>
</feature>
<feature type="sequence variant" id="VAR_033440" description="In allele DPB1*02:01, allele DPB1*02:02, allele DPB1*02:03, allele DPB1*04:03, allele DPB1*06:01, allele DPB1*08:01, allele DPB1*08:02, allele DPB1*09:01, allele DPB1*09:02, allele DPB1*10:01, allele DPB1*11:02, allele DPB1*13:01, allele DPB1*13:02, allele DPB1*16:01, allele DPB1*16:02, allele DPB1*17:01, allele DPB1*18:02, allele DPB1*19:01, allele DPB1*20:02, allele DPB1*21:01, allele DPB1*22:01, allele DPB1*26:02, allele DPB1*29:01, allele DPB1*30:01, allele DPB1*32:01, allele DPB1*33:01, allele DPB1*37:01, allele DPB1*41:01, allele DPB1*44:01, allele DPB1*46:01, allele DPB1*47:01, allele DPB1*48:01, allele DPB1*54:01, allele DPB1*55:01, allele DPB1*58:01, allele DPB1*71:01, allele DPB1*81:01, allele DPB1*86:01, allele DPB1*88:01, allele DPB1*93:01 and allele DPB1*95:01; dbSNP:rs1042140.">
    <original>K</original>
    <variation>E</variation>
    <location>
        <position position="98"/>
    </location>
</feature>
<feature type="sequence variant" id="VAR_033441" description="In allele DPB1*11:01, allele DPB1*15:01, allele DPB1*69:01 and allele DPB1*74:01; dbSNP:rs12722027.">
    <original>K</original>
    <variation>R</variation>
    <location>
        <position position="98"/>
    </location>
</feature>
<feature type="sequence variant" id="VAR_060652" description="In allele DPB1*94:01; dbSNP:rs41554314.">
    <original>R</original>
    <variation>W</variation>
    <location>
        <position position="99"/>
    </location>
</feature>
<feature type="sequence variant" id="VAR_060653" description="In allele DPB1*31:01 and allele DPB1*34:01; dbSNP:rs41546618.">
    <original>V</original>
    <variation>L</variation>
    <location>
        <position position="101"/>
    </location>
</feature>
<feature type="sequence variant" id="VAR_060654" description="In allele DPB1*78:01; dbSNP:rs41551920.">
    <original>P</original>
    <variation>L</variation>
    <location>
        <position position="102"/>
    </location>
</feature>
<feature type="sequence variant" id="VAR_033443" description="In allele DPB1*08:02, allele DPB1*09:02, allele DPB1*13:01, allele DPB1*13:02 and allele DPB1*19:01; dbSNP:rs1042153.">
    <original>M</original>
    <variation>I</variation>
    <location>
        <position position="105"/>
    </location>
</feature>
<feature type="sequence variant" id="VAR_033442" description="In allele DPB1*01:01, allele DPB1*03:01, allele DPB1*05:02, allele DPB1*08:01, allele DPB1*09:01, allele DPB1*10:01, allele DPB1*14:01, allele DPB1*14:02, allele DPB1*17:02, allele DPB1*21:02, allele DPB1*22:02, allele DPB1*25:01, allele DPB1*25:02, allele DPB1*26:01, allele DPB1*29:01, allele DPB1*35:01, allele DPB1*37:01, allele DPB1*44:01, allele DPB1*45:01, allele DPB1*50:01, allele DPB1*52:01, allele DPB1*54:01, allele DPB1*56:01, allele DPB1*57:01, allele DPB1*65:01, allele DPB1*67:01, allele DPB1*68:01, allele DPB1*70:01, allele DPB1*73:01, allele DPB1*75:01, allele DPB1*76:01, allele DPB1*78:01, allele DPB1*79:01, allele DPB1*84:01, allele DPB1*88:01, allele DPB1*90:01 and allele DPB1*92:01; dbSNP:rs1042151." evidence="3">
    <original>M</original>
    <variation>V</variation>
    <location>
        <position position="105"/>
    </location>
</feature>
<feature type="sequence variant" id="VAR_060657" description="In allele DPB1*01:01, allele DPB1*03:01, allele DPB1*03:02, allele DPB1*04:03, allele DPB1*05:01, allele DPB1*05:02, allele DPB1*06:01, allele DPB1*08:01, allele DPB1*08:02, allele DPB1*09:01, allele DPB1*09:02, allele DPB1*10:01, allele DPB1*11:01, allele DPB1*11:01, allele DPB1*13:01, allele DPB1*13:02, allele DPB1*13:02, allele DPB1*14:01, allele DPB1*14:02, allele DPB1*16:01, allele DPB1*17:01, allele DPB1*17:02, allele DPB1*19:01, allele DPB1*21:01, allele DPB1*21:01, allele DPB1*21:02, allele DPB1*21:02, allele DPB1*20:01, allele DPB1*22:01, allele DPB1*25:01, allele DPB1*25:02, allele DPB1*26:01, allele DPB1*27:01, allele DPB1*29:01, allele DPB1*30:01, allele DPB1*31:01, allele DPB1*35:01, allele DPB1*36:01, allele DPB1*37:01, allele DPB1*38:01, allele DPB1*44:01, allele DPB1*45:01, allele DPB1*50:01, allele DPB1*52:01, allele DPB1*54:01, allele DPB1*55:01, allele DPB1*56:01, allele DPB1*57:01, allele DPB1*58:01, allele DPB1*63:01, allele DPB1*65:01, allele DPB1*67:01, allele DPB1*68:01, allele DPB1*69:01, allele DPB1*70:01, allele DPB1*76:01, allele DPB1*78:01, allele DPB1*79:01, allele DPB1*84:01, allele DPB1*85:01, allele DPB1*87:01, allele DPB1*88:01, allele DPB1*89:01, allele DPB1*90:01, allele DPB1*91:01, allele DPB1*92:01, allele DPB1*93:01, allele DPB1*97:01 and allele DPB1*98:01; dbSNP:rs1042169." evidence="3">
    <original>G</original>
    <variation>D</variation>
    <location>
        <position position="113"/>
    </location>
</feature>
<feature type="sequence variant" id="VAR_060655" description="In allele DPB1*22:02; requires 2 nucleotide substitutions.">
    <original>G</original>
    <variation>N</variation>
    <location>
        <position position="113"/>
    </location>
</feature>
<feature type="sequence variant" id="VAR_060656" description="In allele DPB1*15:01, allele DPB1*18:01, allele DPB1*28:01, allele DPB1*34:01, allele DPB1*40:01, allele DPB1*53:01, allele DPB1*62:01 and allele DPB1*74:01; dbSNP:rs1042169.">
    <original>G</original>
    <variation>V</variation>
    <location>
        <position position="113"/>
    </location>
</feature>
<feature type="sequence variant" id="VAR_033444" description="In allele DPB1*01:01, allele DPB1*03:01, allele DPB1*03:02, allele DPB1*04:03, allele DPB1*05:01, allele DPB1*05:02, allele DPB1*06:01, allele DPB1*08:01, allele DPB1*08:02, allele DPB1*09:01, allele DPB1*09:02, allele DPB1*10:01, allele DPB1*11:01, allele DPB1*13:01, allele DPB1*13:02, allele DPB1*14:01, allele DPB1*14:02, allele DPB1*16:01, allele DPB1*17:01, allele DPB1*17:02, allele DPB1*19:01, allele DPB1*21:01, allele DPB1*21:02, allele DPB1*20:01, allele DPB1*22:01, allele DPB1*22:02, allele DPB1*25:01, allele DPB1*25:02, allele DPB1*26:01, allele DPB1*27:01, allele DPB1*29:01, allele DPB1*30:01, allele DPB1*31:01, allele DPB1*35:01, allele DPB1*36:01, allele DPB1*37:01, allele DPB1*38:01, allele DPB1*44:01, allele DPB1*45:01, allele DPB1*50:01, allele DPB1*52:01, allele DPB1*54:01, allele DPB1*55:01, allele DPB1*56:01, allele DPB1*57:01, allele DPB1*58:01, allele DPB1*63:01, allele DPB1*65:01, allele DPB1*67:01, allele DPB1*68:01, allele DPB1*69:01, allele DPB1*70:01, allele DPB1*76:01, allele DPB1*78:01, allele DPB1*79:01, allele DPB1*84:01, allele DPB1*85:01, allele DPB1*87:01, allele DPB1*88:01, allele DPB1*89:01, allele DPB1*90:01, allele DPB1*91:01, allele DPB1*92:01, allele DPB1*93:01, allele DPB1*97:01 and allele DPB1*98:01; dbSNP:rs9277354." evidence="3">
    <original>G</original>
    <variation>E</variation>
    <location>
        <position position="114"/>
    </location>
</feature>
<feature type="sequence variant" id="VAR_033445" description="In allele DPB1*01:01, allele DPB1*03:01, allele DPB1*03:02, allele DPB1*04:03, allele DPB1*05:01, allele DPB1*05:02, allele DPB1*06:01, allele DPB1*08:01, allele DPB1*08:02, allele DPB1*09:01, allele DPB1*09:02, allele DPB1*10:01, allele DPB1*11:01, allele DPB1*13:01, allele DPB1*13:02, allele DPB1*14:01, allele DPB1*14:02, allele DPB1*16:01, allele DPB1*17:01, allele DPB1*17:02, allele DPB1*19:01, allele DPB1*21:01, allele DPB1*21:02, allele DPB1*20:01, allele DPB1*22:01, allele DPB1*22:02, allele DPB1*25:01, allele DPB1*25:02, allele DPB1*26:01, allele DPB1*27:01, allele DPB1*29:01, allele DPB1*30:01, allele DPB1*31:01, allele DPB1*35:01, allele DPB1*36:01, allele DPB1*37:01, allele DPB1*38:01, allele DPB1*44:01, allele DPB1*45:01, allele DPB1*50:01, allele DPB1*52:01, allele DPB1*54:01, allele DPB1*55:01, allele DPB1*56:01, allele DPB1*57:01, allele DPB1*58:01, allele DPB1*63:01, allele DPB1*65:01, allele DPB1*67:01, allele DPB1*68:01, allele DPB1*69:01, allele DPB1*70:01, allele DPB1*76:01, allele DPB1*78:01, allele DPB1*79:01, allele DPB1*84:01, allele DPB1*85:01, allele DPB1*87:01, allele DPB1*88:01, allele DPB1*89:01, allele DPB1*90:01, allele DPB1*91:01, allele DPB1*92:01, allele DPB1*93:01, allele DPB1*97:01 and allele DPB1*98:01; dbSNP:rs9277355." evidence="3">
    <original>P</original>
    <variation>A</variation>
    <location>
        <position position="115"/>
    </location>
</feature>
<feature type="sequence variant" id="VAR_033446" description="In allele DPB1*01:01, allele DPB1*03:01, allele DPB1*03:02, allele DPB1*04:03, allele DPB1*05:01, allele DPB1*05:02, allele DPB1*06:01, allele DPB1*08:01, allele DPB1*08:02, allele DPB1*09:01, allele DPB1*09:02, allele DPB1*10:01, allele DPB1*11:01, allele DPB1*13:01, allele DPB1*13:02, allele DPB1*14:01, allele DPB1*14:02, allele DPB1*16:01, allele DPB1*17:01, allele DPB1*17:02, allele DPB1*19:01, allele DPB1*21:01, allele DPB1*21:02, allele DPB1*20:01, allele DPB1*22:01, allele DPB1*22:02, allele DPB1*25:01, allele DPB1*25:02, allele DPB1*26:01, allele DPB1*27:01, allele DPB1*29:01, allele DPB1*30:01, allele DPB1*31:01, allele DPB1*35:01, allele DPB1*36:01, allele DPB1*37:01, allele DPB1*38:01, allele DPB1*44:01, allele DPB1*45:01, allele DPB1*50:01, allele DPB1*52:01, allele DPB1*54:01, allele DPB1*55:01, allele DPB1*56:01, allele DPB1*58:01, allele DPB1*63:01, allele DPB1*65:01, allele DPB1*67:01, allele DPB1*68:01, allele DPB1*69:01, allele DPB1*70:01, allele DPB1*76:01, allele DPB1*78:01, allele DPB1*79:01, allele DPB1*84:01, allele DPB1*85:01, allele DPB1*87:01, allele DPB1*88:01, allele DPB1*89:01, allele DPB1*90:01, allele DPB1*91:01, allele DPB1*92:01, allele DPB1*93:01, allele DPB1*97:01 and allele DPB1*98:01; dbSNP:rs9277356." evidence="3">
    <original>M</original>
    <variation>V</variation>
    <location>
        <position position="116"/>
    </location>
</feature>
<feature type="sequence variant" id="VAR_060658" description="In allele DPB1*82:01 and allele DPB1*85:01; dbSNP:rs41541915.">
    <original>R</original>
    <variation>H</variation>
    <location>
        <position position="120"/>
    </location>
</feature>
<feature type="sequence variant" id="VAR_060659" description="In allele DPB1*01:01, allele DPB1*03:01, allele DPB1*05:01, allele DPB1*05:02, allele DPB1*06:01, allele DPB1*09:01, allele DPB1*09:02, allele DPB1*13:01, allele DPB1*14:01, allele DPB1*15:01, allele DPB1*18:01, allele DPB1*19:01, allele DPB1*20:01, allele DPB1*26:01, allele DPB1*45:01 and allele DPB1*85:01; dbSNP:rs1126537." evidence="3">
    <original>R</original>
    <variation>K</variation>
    <location>
        <position position="125"/>
    </location>
</feature>
<feature type="sequence variant" id="VAR_060660" description="In allele DPB1*01:01, allele DPB1*03:01, allele DPB1*05:01, allele DPB1*05:02, allele DPB1*06:01, allele DPB1*09:01, allele DPB1*09:02, allele DPB1*13:01, allele DPB1*14:01, allele DPB1*15:01, allele DPB1*18:01, allele DPB1*19:01, allele DPB1*20:01, allele DPB1*26:01, allele DPB1*45:01 and allele DPB1*85:01; dbSNP:rs1042335." evidence="3">
    <original>T</original>
    <variation>I</variation>
    <location>
        <position position="199"/>
    </location>
</feature>
<feature type="sequence variant" id="VAR_033447" description="In allele DPB1*04:02; dbSNP:rs14362.">
    <original>L</original>
    <variation>M</variation>
    <location>
        <position position="207"/>
    </location>
</feature>
<feature type="sequence variant" id="VAR_050393" description="In allele DPB1*01:01; dbSNP:rs9276.">
    <original>R</original>
    <variation>Q</variation>
    <location>
        <position position="223"/>
    </location>
</feature>
<feature type="sequence variant" id="VAR_050394" description="In allele DPB1*05:01 and allele DPB1*19:01; dbSNP:rs11551421.">
    <original>V</original>
    <variation>M</variation>
    <location>
        <position position="234"/>
    </location>
</feature>
<feature type="sequence variant" id="VAR_033448" description="In allele DPB1*15:01; dbSNP:rs3097675.">
    <original>I</original>
    <variation>T</variation>
    <location>
        <position position="244"/>
    </location>
</feature>
<feature type="strand" evidence="5">
    <location>
        <begin position="37"/>
        <end position="47"/>
    </location>
</feature>
<feature type="strand" evidence="5">
    <location>
        <begin position="50"/>
        <end position="59"/>
    </location>
</feature>
<feature type="strand" evidence="5">
    <location>
        <begin position="62"/>
        <end position="68"/>
    </location>
</feature>
<feature type="turn" evidence="5">
    <location>
        <begin position="69"/>
        <end position="71"/>
    </location>
</feature>
<feature type="strand" evidence="5">
    <location>
        <begin position="73"/>
        <end position="78"/>
    </location>
</feature>
<feature type="helix" evidence="5">
    <location>
        <begin position="79"/>
        <end position="81"/>
    </location>
</feature>
<feature type="helix" evidence="5">
    <location>
        <begin position="82"/>
        <end position="89"/>
    </location>
</feature>
<feature type="helix" evidence="5">
    <location>
        <begin position="92"/>
        <end position="99"/>
    </location>
</feature>
<feature type="turn" evidence="5">
    <location>
        <begin position="100"/>
        <end position="104"/>
    </location>
</feature>
<feature type="helix" evidence="5">
    <location>
        <begin position="105"/>
        <end position="112"/>
    </location>
</feature>
<feature type="helix" evidence="5">
    <location>
        <begin position="114"/>
        <end position="118"/>
    </location>
</feature>
<feature type="strand" evidence="5">
    <location>
        <begin position="125"/>
        <end position="130"/>
    </location>
</feature>
<feature type="helix" evidence="5">
    <location>
        <begin position="134"/>
        <end position="137"/>
    </location>
</feature>
<feature type="strand" evidence="5">
    <location>
        <begin position="141"/>
        <end position="152"/>
    </location>
</feature>
<feature type="strand" evidence="5">
    <location>
        <begin position="155"/>
        <end position="160"/>
    </location>
</feature>
<feature type="strand" evidence="5">
    <location>
        <begin position="163"/>
        <end position="165"/>
    </location>
</feature>
<feature type="strand" evidence="5">
    <location>
        <begin position="167"/>
        <end position="171"/>
    </location>
</feature>
<feature type="strand" evidence="5">
    <location>
        <begin position="178"/>
        <end position="180"/>
    </location>
</feature>
<feature type="strand" evidence="5">
    <location>
        <begin position="182"/>
        <end position="189"/>
    </location>
</feature>
<feature type="strand" evidence="5">
    <location>
        <begin position="197"/>
        <end position="203"/>
    </location>
</feature>
<feature type="strand" evidence="5">
    <location>
        <begin position="211"/>
        <end position="216"/>
    </location>
</feature>
<evidence type="ECO:0000255" key="1"/>
<evidence type="ECO:0000255" key="2">
    <source>
        <dbReference type="PROSITE-ProRule" id="PRU00114"/>
    </source>
</evidence>
<evidence type="ECO:0000269" key="3">
    <source>
    </source>
</evidence>
<evidence type="ECO:0000305" key="4"/>
<evidence type="ECO:0007829" key="5">
    <source>
        <dbReference type="PDB" id="4P5M"/>
    </source>
</evidence>